<feature type="signal peptide" evidence="28 30">
    <location>
        <begin position="1"/>
        <end position="25"/>
    </location>
</feature>
<feature type="chain" id="PRO_0000027545" description="Complement factor B">
    <location>
        <begin position="26"/>
        <end position="764"/>
    </location>
</feature>
<feature type="chain" id="PRO_0000027546" description="Complement factor B Ba" evidence="43">
    <location>
        <begin position="26"/>
        <end position="259"/>
    </location>
</feature>
<feature type="chain" id="PRO_0000027547" description="Complement factor B Bb" evidence="43">
    <location>
        <begin position="260"/>
        <end position="764"/>
    </location>
</feature>
<feature type="domain" description="Sushi 1" evidence="3">
    <location>
        <begin position="35"/>
        <end position="100"/>
    </location>
</feature>
<feature type="domain" description="Sushi 2" evidence="3">
    <location>
        <begin position="101"/>
        <end position="160"/>
    </location>
</feature>
<feature type="domain" description="Sushi 3" evidence="3">
    <location>
        <begin position="163"/>
        <end position="220"/>
    </location>
</feature>
<feature type="domain" description="VWFA" evidence="1">
    <location>
        <begin position="270"/>
        <end position="469"/>
    </location>
</feature>
<feature type="domain" description="Peptidase S1" evidence="2">
    <location>
        <begin position="477"/>
        <end position="757"/>
    </location>
</feature>
<feature type="active site" description="Charge relay system" evidence="4">
    <location>
        <position position="526"/>
    </location>
</feature>
<feature type="active site" description="Charge relay system" evidence="4">
    <location>
        <position position="576"/>
    </location>
</feature>
<feature type="active site" description="Charge relay system" evidence="4">
    <location>
        <position position="699"/>
    </location>
</feature>
<feature type="binding site" evidence="7 15 16 19 48 49 50 52 53">
    <location>
        <position position="278"/>
    </location>
    <ligand>
        <name>Mg(2+)</name>
        <dbReference type="ChEBI" id="CHEBI:18420"/>
    </ligand>
</feature>
<feature type="binding site" evidence="6 45">
    <location>
        <position position="278"/>
    </location>
    <ligand>
        <name>Mn(2+)</name>
        <dbReference type="ChEBI" id="CHEBI:29035"/>
    </ligand>
</feature>
<feature type="binding site" evidence="7 15 16 19 48 49 50 52 53">
    <location>
        <position position="280"/>
    </location>
    <ligand>
        <name>Mg(2+)</name>
        <dbReference type="ChEBI" id="CHEBI:18420"/>
    </ligand>
</feature>
<feature type="binding site" evidence="6 45">
    <location>
        <position position="280"/>
    </location>
    <ligand>
        <name>Mn(2+)</name>
        <dbReference type="ChEBI" id="CHEBI:29035"/>
    </ligand>
</feature>
<feature type="binding site" evidence="7 15 16 19 48 49 50 52 53">
    <location>
        <position position="353"/>
    </location>
    <ligand>
        <name>Mg(2+)</name>
        <dbReference type="ChEBI" id="CHEBI:18420"/>
    </ligand>
</feature>
<feature type="binding site" evidence="6 45">
    <location>
        <position position="353"/>
    </location>
    <ligand>
        <name>Mn(2+)</name>
        <dbReference type="ChEBI" id="CHEBI:29035"/>
    </ligand>
</feature>
<feature type="site" description="Cleavage; by CFD" evidence="30">
    <location>
        <begin position="259"/>
        <end position="260"/>
    </location>
</feature>
<feature type="glycosylation site" description="N-linked (GlcNAc...) asparagine" evidence="10 13 14 28">
    <location>
        <position position="122"/>
    </location>
</feature>
<feature type="glycosylation site" description="N-linked (GlcNAc...) asparagine" evidence="13 16 28">
    <location>
        <position position="142"/>
    </location>
</feature>
<feature type="glycosylation site" description="N-linked (GlcNAc...) asparagine" evidence="10 13 14 28">
    <location>
        <position position="285"/>
    </location>
</feature>
<feature type="glycosylation site" description="N-linked (Glc) (glycation) lysine" evidence="17">
    <location>
        <position position="291"/>
    </location>
</feature>
<feature type="glycosylation site" description="N-linked (GlcNAc...) asparagine" evidence="10 13 15 16 28 49">
    <location>
        <position position="378"/>
    </location>
</feature>
<feature type="disulfide bond" evidence="16">
    <location>
        <begin position="37"/>
        <end position="76"/>
    </location>
</feature>
<feature type="disulfide bond" evidence="16">
    <location>
        <begin position="62"/>
        <end position="98"/>
    </location>
</feature>
<feature type="disulfide bond" evidence="16">
    <location>
        <begin position="103"/>
        <end position="145"/>
    </location>
</feature>
<feature type="disulfide bond" evidence="16">
    <location>
        <begin position="131"/>
        <end position="158"/>
    </location>
</feature>
<feature type="disulfide bond" evidence="16">
    <location>
        <begin position="165"/>
        <end position="205"/>
    </location>
</feature>
<feature type="disulfide bond" evidence="16">
    <location>
        <begin position="191"/>
        <end position="218"/>
    </location>
</feature>
<feature type="disulfide bond" evidence="16">
    <location>
        <begin position="478"/>
        <end position="596"/>
    </location>
</feature>
<feature type="disulfide bond" evidence="16">
    <location>
        <begin position="511"/>
        <end position="527"/>
    </location>
</feature>
<feature type="disulfide bond" evidence="16">
    <location>
        <begin position="599"/>
        <end position="615"/>
    </location>
</feature>
<feature type="disulfide bond" evidence="16">
    <location>
        <begin position="656"/>
        <end position="682"/>
    </location>
</feature>
<feature type="disulfide bond" evidence="16">
    <location>
        <begin position="695"/>
        <end position="725"/>
    </location>
</feature>
<feature type="splice variant" id="VSP_005380" description="In isoform 2." evidence="41">
    <original>GEKRDLEIEVVLFHPNYNINGKKEAGIPEFYDYDVALIKLKNKLKYGQTIRPICLPCTEGTTRALRLPPTTTCQQQKEE</original>
    <variation>KDATEGPGLHLCSPGNTSHFLQILHSTHPQCSPIPCTPDQSGMGEDVKLGMTRGQRQEAAHKEVVPTLLLQEGRSGTWR</variation>
    <location>
        <begin position="543"/>
        <end position="621"/>
    </location>
</feature>
<feature type="splice variant" id="VSP_005381" description="In isoform 2." evidence="41">
    <location>
        <begin position="622"/>
        <end position="764"/>
    </location>
</feature>
<feature type="sequence variant" id="VAR_016274" description="May be associated with a reduced risk for age-related macular degeneration; dbSNP:rs4151667." evidence="11 38">
    <original>L</original>
    <variation>H</variation>
    <location>
        <position position="9"/>
    </location>
</feature>
<feature type="sequence variant" id="VAR_006493" description="In allele FA; requires 2 nucleotide substitutions." evidence="20">
    <original>W</original>
    <variation>Q</variation>
    <location>
        <position position="28"/>
    </location>
</feature>
<feature type="sequence variant" id="VAR_006492" description="In allele S." evidence="20 32 33 34">
    <original>W</original>
    <variation>R</variation>
    <location>
        <position position="28"/>
    </location>
</feature>
<feature type="sequence variant" id="VAR_006494" description="In allele S; may be associated with a reduced risk for age-related macular degeneration; dbSNP:rs641153." evidence="11 20 32 33 34 38">
    <original>R</original>
    <variation>Q</variation>
    <location>
        <position position="32"/>
    </location>
</feature>
<feature type="sequence variant" id="VAR_016275" description="In dbSNP:rs12614." evidence="8 37 38 39">
    <original>R</original>
    <variation>W</variation>
    <location>
        <position position="32"/>
    </location>
</feature>
<feature type="sequence variant" id="VAR_063659" description="In AHUS4." evidence="18">
    <original>S</original>
    <variation>P</variation>
    <location>
        <position position="166"/>
    </location>
</feature>
<feature type="sequence variant" id="VAR_063660" description="In AHUS4; dbSNP:rs745794224." evidence="18">
    <original>R</original>
    <variation>Q</variation>
    <location>
        <position position="203"/>
    </location>
</feature>
<feature type="sequence variant" id="VAR_063661" description="In AHUS4; dbSNP:rs144812066." evidence="18">
    <original>I</original>
    <variation>L</variation>
    <location>
        <position position="242"/>
    </location>
</feature>
<feature type="sequence variant" id="VAR_016276" description="In dbSNP:rs4151651." evidence="38">
    <original>G</original>
    <variation>S</variation>
    <location>
        <position position="252"/>
    </location>
</feature>
<feature type="sequence variant" id="VAR_063221" description="In AHUS4; gain-of-function mutation that results in enhanced formation of the C3bBb; dbSNP:rs117905900." evidence="12">
    <original>F</original>
    <variation>L</variation>
    <location>
        <position position="286"/>
    </location>
</feature>
<feature type="sequence variant" id="VAR_063222" description="In AHUS4; gain-of-function mutation that results in enhanced formation of the C3bBb; dbSNP:rs121909748." evidence="12">
    <original>K</original>
    <variation>E</variation>
    <location>
        <position position="323"/>
    </location>
</feature>
<feature type="sequence variant" id="VAR_063662" description="In AHUS4." evidence="18">
    <original>K</original>
    <variation>Q</variation>
    <location>
        <position position="323"/>
    </location>
</feature>
<feature type="sequence variant" id="VAR_063663" description="In AHUS4; dbSNP:rs200837114." evidence="18">
    <original>M</original>
    <variation>I</variation>
    <location>
        <position position="458"/>
    </location>
</feature>
<feature type="sequence variant" id="VAR_063664" description="In AHUS4; benign; dbSNP:rs149101394." evidence="18">
    <original>K</original>
    <variation>R</variation>
    <location>
        <position position="533"/>
    </location>
</feature>
<feature type="sequence variant" id="VAR_016277" description="In dbSNP:rs4151659." evidence="5 38">
    <original>K</original>
    <variation>E</variation>
    <location>
        <position position="565"/>
    </location>
</feature>
<feature type="sequence variant" id="VAR_016278" description="In dbSNP:rs4151660." evidence="38">
    <original>D</original>
    <variation>E</variation>
    <location>
        <position position="651"/>
    </location>
</feature>
<feature type="sequence variant" id="VAR_006495" description="In allele FA." evidence="20">
    <original>A</original>
    <variation>S</variation>
    <location>
        <position position="736"/>
    </location>
</feature>
<feature type="mutagenesis site" description="Decreases binding to the pro-C3-convertase complex. Does not affect Complement C3 beta chain binding." evidence="24">
    <original>KLK</original>
    <variation>AAA</variation>
    <location>
        <begin position="348"/>
        <end position="350"/>
    </location>
</feature>
<feature type="mutagenesis site" description="Reduced formation of C3 convertase." evidence="19">
    <original>E</original>
    <variation>A</variation>
    <location>
        <position position="471"/>
    </location>
</feature>
<feature type="mutagenesis site" description="Decreased cleavage and activation by CFD." evidence="19">
    <original>E</original>
    <variation>L</variation>
    <location>
        <position position="644"/>
    </location>
</feature>
<feature type="mutagenesis site" description="Decreased cleavage and activation by CFD." evidence="19">
    <original>Y</original>
    <variation>F</variation>
    <location>
        <position position="689"/>
    </location>
</feature>
<feature type="mutagenesis site" description="Decreased cleavage and activation by CFD." evidence="19">
    <original>A</original>
    <variation>W</variation>
    <location>
        <position position="690"/>
    </location>
</feature>
<feature type="mutagenesis site" description="Decreased cleavage and activation by CFD." evidence="19">
    <original>Q</original>
    <variation>R</variation>
    <location>
        <position position="733"/>
    </location>
</feature>
<feature type="mutagenesis site" description="Decreased cleavage and activation by CFD." evidence="19">
    <original>V</original>
    <variation>G</variation>
    <location>
        <position position="734"/>
    </location>
</feature>
<feature type="mutagenesis site" description="Abolished ability to cleave C3, without affecting cleavage by CFD and interaction with complement C3b." evidence="36">
    <original>D</original>
    <variation>N</variation>
    <variation>E</variation>
    <variation>A</variation>
    <variation>S</variation>
    <variation>Y</variation>
    <location>
        <position position="740"/>
    </location>
</feature>
<feature type="mutagenesis site" description="Abolished ability to cleave C3, without affecting cleavage by CFD and interaction with complement C3b." evidence="36">
    <original>F</original>
    <variation>W</variation>
    <variation>A</variation>
    <location>
        <position position="741"/>
    </location>
</feature>
<feature type="sequence conflict" description="In Ref. 12; AA sequence." evidence="42" ref="12">
    <original>S</original>
    <variation>H</variation>
    <location>
        <position position="48"/>
    </location>
</feature>
<feature type="sequence conflict" description="In Ref. 14; AA sequence." evidence="42" ref="14">
    <original>I</original>
    <variation>T</variation>
    <location>
        <position position="297"/>
    </location>
</feature>
<feature type="sequence conflict" description="In Ref. 13; AAA36225." evidence="42" ref="13">
    <original>V</original>
    <variation>L</variation>
    <location>
        <position position="300"/>
    </location>
</feature>
<feature type="sequence conflict" description="In Ref. 13; AAA36225." evidence="42" ref="13">
    <original>D</original>
    <variation>V</variation>
    <location>
        <position position="328"/>
    </location>
</feature>
<feature type="sequence conflict" description="In Ref. 13; AAA36225." evidence="42" ref="13">
    <original>KK</original>
    <variation>EE</variation>
    <location>
        <begin position="356"/>
        <end position="357"/>
    </location>
</feature>
<feature type="sequence conflict" description="In Ref. 16; AAA36219." evidence="42" ref="16">
    <original>I</original>
    <variation>T</variation>
    <location>
        <position position="537"/>
    </location>
</feature>
<feature type="sequence conflict" description="In Ref. 16; AAA36220." evidence="42" ref="16">
    <original>L</original>
    <variation>H</variation>
    <location>
        <position position="764"/>
    </location>
</feature>
<feature type="strand" evidence="62">
    <location>
        <begin position="47"/>
        <end position="51"/>
    </location>
</feature>
<feature type="helix" evidence="62">
    <location>
        <begin position="53"/>
        <end position="55"/>
    </location>
</feature>
<feature type="strand" evidence="62">
    <location>
        <begin position="56"/>
        <end position="61"/>
    </location>
</feature>
<feature type="strand" evidence="62">
    <location>
        <begin position="66"/>
        <end position="70"/>
    </location>
</feature>
<feature type="strand" evidence="62">
    <location>
        <begin position="72"/>
        <end position="76"/>
    </location>
</feature>
<feature type="strand" evidence="60">
    <location>
        <begin position="80"/>
        <end position="82"/>
    </location>
</feature>
<feature type="strand" evidence="61">
    <location>
        <begin position="88"/>
        <end position="90"/>
    </location>
</feature>
<feature type="strand" evidence="62">
    <location>
        <begin position="92"/>
        <end position="94"/>
    </location>
</feature>
<feature type="strand" evidence="62">
    <location>
        <begin position="97"/>
        <end position="100"/>
    </location>
</feature>
<feature type="strand" evidence="62">
    <location>
        <begin position="112"/>
        <end position="115"/>
    </location>
</feature>
<feature type="strand" evidence="62">
    <location>
        <begin position="119"/>
        <end position="122"/>
    </location>
</feature>
<feature type="strand" evidence="62">
    <location>
        <begin position="126"/>
        <end position="131"/>
    </location>
</feature>
<feature type="strand" evidence="62">
    <location>
        <begin position="136"/>
        <end position="139"/>
    </location>
</feature>
<feature type="strand" evidence="62">
    <location>
        <begin position="141"/>
        <end position="145"/>
    </location>
</feature>
<feature type="strand" evidence="62">
    <location>
        <begin position="151"/>
        <end position="153"/>
    </location>
</feature>
<feature type="strand" evidence="62">
    <location>
        <begin position="157"/>
        <end position="159"/>
    </location>
</feature>
<feature type="strand" evidence="62">
    <location>
        <begin position="163"/>
        <end position="165"/>
    </location>
</feature>
<feature type="strand" evidence="62">
    <location>
        <begin position="174"/>
        <end position="177"/>
    </location>
</feature>
<feature type="strand" evidence="62">
    <location>
        <begin position="186"/>
        <end position="191"/>
    </location>
</feature>
<feature type="strand" evidence="62">
    <location>
        <begin position="195"/>
        <end position="199"/>
    </location>
</feature>
<feature type="strand" evidence="62">
    <location>
        <begin position="201"/>
        <end position="205"/>
    </location>
</feature>
<feature type="strand" evidence="62">
    <location>
        <begin position="209"/>
        <end position="213"/>
    </location>
</feature>
<feature type="strand" evidence="62">
    <location>
        <begin position="217"/>
        <end position="219"/>
    </location>
</feature>
<feature type="helix" evidence="62">
    <location>
        <begin position="227"/>
        <end position="238"/>
    </location>
</feature>
<feature type="strand" evidence="64">
    <location>
        <begin position="239"/>
        <end position="241"/>
    </location>
</feature>
<feature type="strand" evidence="57">
    <location>
        <begin position="269"/>
        <end position="276"/>
    </location>
</feature>
<feature type="turn" evidence="57">
    <location>
        <begin position="279"/>
        <end position="281"/>
    </location>
</feature>
<feature type="helix" evidence="57">
    <location>
        <begin position="283"/>
        <end position="301"/>
    </location>
</feature>
<feature type="turn" evidence="57">
    <location>
        <begin position="302"/>
        <end position="304"/>
    </location>
</feature>
<feature type="strand" evidence="57">
    <location>
        <begin position="308"/>
        <end position="322"/>
    </location>
</feature>
<feature type="strand" evidence="63">
    <location>
        <begin position="324"/>
        <end position="326"/>
    </location>
</feature>
<feature type="helix" evidence="57">
    <location>
        <begin position="327"/>
        <end position="330"/>
    </location>
</feature>
<feature type="helix" evidence="57">
    <location>
        <begin position="332"/>
        <end position="340"/>
    </location>
</feature>
<feature type="helix" evidence="58">
    <location>
        <begin position="344"/>
        <end position="346"/>
    </location>
</feature>
<feature type="strand" evidence="62">
    <location>
        <begin position="348"/>
        <end position="350"/>
    </location>
</feature>
<feature type="helix" evidence="57">
    <location>
        <begin position="355"/>
        <end position="366"/>
    </location>
</feature>
<feature type="strand" evidence="63">
    <location>
        <begin position="369"/>
        <end position="372"/>
    </location>
</feature>
<feature type="helix" evidence="57">
    <location>
        <begin position="377"/>
        <end position="379"/>
    </location>
</feature>
<feature type="strand" evidence="57">
    <location>
        <begin position="381"/>
        <end position="388"/>
    </location>
</feature>
<feature type="strand" evidence="57">
    <location>
        <begin position="394"/>
        <end position="396"/>
    </location>
</feature>
<feature type="helix" evidence="57">
    <location>
        <begin position="399"/>
        <end position="408"/>
    </location>
</feature>
<feature type="strand" evidence="59">
    <location>
        <begin position="412"/>
        <end position="414"/>
    </location>
</feature>
<feature type="strand" evidence="65">
    <location>
        <begin position="415"/>
        <end position="417"/>
    </location>
</feature>
<feature type="helix" evidence="57">
    <location>
        <begin position="420"/>
        <end position="422"/>
    </location>
</feature>
<feature type="strand" evidence="57">
    <location>
        <begin position="423"/>
        <end position="429"/>
    </location>
</feature>
<feature type="strand" evidence="58">
    <location>
        <begin position="431"/>
        <end position="433"/>
    </location>
</feature>
<feature type="helix" evidence="57">
    <location>
        <begin position="436"/>
        <end position="442"/>
    </location>
</feature>
<feature type="strand" evidence="57">
    <location>
        <begin position="452"/>
        <end position="454"/>
    </location>
</feature>
<feature type="strand" evidence="62">
    <location>
        <begin position="455"/>
        <end position="457"/>
    </location>
</feature>
<feature type="helix" evidence="58">
    <location>
        <begin position="458"/>
        <end position="468"/>
    </location>
</feature>
<feature type="helix" evidence="58">
    <location>
        <begin position="471"/>
        <end position="474"/>
    </location>
</feature>
<feature type="strand" evidence="64">
    <location>
        <begin position="475"/>
        <end position="477"/>
    </location>
</feature>
<feature type="strand" evidence="56">
    <location>
        <begin position="483"/>
        <end position="485"/>
    </location>
</feature>
<feature type="helix" evidence="58">
    <location>
        <begin position="489"/>
        <end position="492"/>
    </location>
</feature>
<feature type="strand" evidence="58">
    <location>
        <begin position="496"/>
        <end position="501"/>
    </location>
</feature>
<feature type="turn" evidence="61">
    <location>
        <begin position="504"/>
        <end position="506"/>
    </location>
</feature>
<feature type="strand" evidence="58">
    <location>
        <begin position="509"/>
        <end position="515"/>
    </location>
</feature>
<feature type="strand" evidence="58">
    <location>
        <begin position="517"/>
        <end position="523"/>
    </location>
</feature>
<feature type="helix" evidence="58">
    <location>
        <begin position="525"/>
        <end position="527"/>
    </location>
</feature>
<feature type="strand" evidence="64">
    <location>
        <begin position="530"/>
        <end position="532"/>
    </location>
</feature>
<feature type="helix" evidence="58">
    <location>
        <begin position="534"/>
        <end position="536"/>
    </location>
</feature>
<feature type="strand" evidence="58">
    <location>
        <begin position="537"/>
        <end position="541"/>
    </location>
</feature>
<feature type="strand" evidence="58">
    <location>
        <begin position="548"/>
        <end position="555"/>
    </location>
</feature>
<feature type="turn" evidence="58">
    <location>
        <begin position="561"/>
        <end position="564"/>
    </location>
</feature>
<feature type="helix" evidence="58">
    <location>
        <begin position="565"/>
        <end position="567"/>
    </location>
</feature>
<feature type="strand" evidence="58">
    <location>
        <begin position="578"/>
        <end position="584"/>
    </location>
</feature>
<feature type="strand" evidence="64">
    <location>
        <begin position="589"/>
        <end position="591"/>
    </location>
</feature>
<feature type="strand" evidence="56">
    <location>
        <begin position="598"/>
        <end position="600"/>
    </location>
</feature>
<feature type="helix" evidence="58">
    <location>
        <begin position="601"/>
        <end position="606"/>
    </location>
</feature>
<feature type="helix" evidence="58">
    <location>
        <begin position="615"/>
        <end position="622"/>
    </location>
</feature>
<feature type="strand" evidence="58">
    <location>
        <begin position="625"/>
        <end position="638"/>
    </location>
</feature>
<feature type="strand" evidence="58">
    <location>
        <begin position="640"/>
        <end position="648"/>
    </location>
</feature>
<feature type="strand" evidence="64">
    <location>
        <begin position="650"/>
        <end position="652"/>
    </location>
</feature>
<feature type="helix" evidence="58">
    <location>
        <begin position="653"/>
        <end position="658"/>
    </location>
</feature>
<feature type="helix" evidence="58">
    <location>
        <begin position="659"/>
        <end position="662"/>
    </location>
</feature>
<feature type="helix" evidence="63">
    <location>
        <begin position="666"/>
        <end position="668"/>
    </location>
</feature>
<feature type="helix" evidence="58">
    <location>
        <begin position="672"/>
        <end position="674"/>
    </location>
</feature>
<feature type="strand" evidence="58">
    <location>
        <begin position="680"/>
        <end position="689"/>
    </location>
</feature>
<feature type="helix" evidence="58">
    <location>
        <begin position="696"/>
        <end position="698"/>
    </location>
</feature>
<feature type="strand" evidence="58">
    <location>
        <begin position="702"/>
        <end position="707"/>
    </location>
</feature>
<feature type="strand" evidence="58">
    <location>
        <begin position="710"/>
        <end position="721"/>
    </location>
</feature>
<feature type="helix" evidence="60">
    <location>
        <begin position="725"/>
        <end position="727"/>
    </location>
</feature>
<feature type="turn" evidence="60">
    <location>
        <begin position="728"/>
        <end position="730"/>
    </location>
</feature>
<feature type="helix" evidence="56">
    <location>
        <begin position="735"/>
        <end position="737"/>
    </location>
</feature>
<feature type="strand" evidence="58">
    <location>
        <begin position="739"/>
        <end position="744"/>
    </location>
</feature>
<feature type="helix" evidence="58">
    <location>
        <begin position="745"/>
        <end position="748"/>
    </location>
</feature>
<feature type="helix" evidence="58">
    <location>
        <begin position="749"/>
        <end position="755"/>
    </location>
</feature>
<feature type="turn" evidence="58">
    <location>
        <begin position="756"/>
        <end position="758"/>
    </location>
</feature>
<evidence type="ECO:0000255" key="1">
    <source>
        <dbReference type="PROSITE-ProRule" id="PRU00219"/>
    </source>
</evidence>
<evidence type="ECO:0000255" key="2">
    <source>
        <dbReference type="PROSITE-ProRule" id="PRU00274"/>
    </source>
</evidence>
<evidence type="ECO:0000255" key="3">
    <source>
        <dbReference type="PROSITE-ProRule" id="PRU00302"/>
    </source>
</evidence>
<evidence type="ECO:0000269" key="4">
    <source>
    </source>
</evidence>
<evidence type="ECO:0000269" key="5">
    <source>
    </source>
</evidence>
<evidence type="ECO:0000269" key="6">
    <source>
    </source>
</evidence>
<evidence type="ECO:0000269" key="7">
    <source>
    </source>
</evidence>
<evidence type="ECO:0000269" key="8">
    <source>
    </source>
</evidence>
<evidence type="ECO:0000269" key="9">
    <source>
    </source>
</evidence>
<evidence type="ECO:0000269" key="10">
    <source>
    </source>
</evidence>
<evidence type="ECO:0000269" key="11">
    <source>
    </source>
</evidence>
<evidence type="ECO:0000269" key="12">
    <source>
    </source>
</evidence>
<evidence type="ECO:0000269" key="13">
    <source>
    </source>
</evidence>
<evidence type="ECO:0000269" key="14">
    <source>
    </source>
</evidence>
<evidence type="ECO:0000269" key="15">
    <source>
    </source>
</evidence>
<evidence type="ECO:0000269" key="16">
    <source>
    </source>
</evidence>
<evidence type="ECO:0000269" key="17">
    <source>
    </source>
</evidence>
<evidence type="ECO:0000269" key="18">
    <source>
    </source>
</evidence>
<evidence type="ECO:0000269" key="19">
    <source>
    </source>
</evidence>
<evidence type="ECO:0000269" key="20">
    <source>
    </source>
</evidence>
<evidence type="ECO:0000269" key="21">
    <source>
    </source>
</evidence>
<evidence type="ECO:0000269" key="22">
    <source>
    </source>
</evidence>
<evidence type="ECO:0000269" key="23">
    <source>
    </source>
</evidence>
<evidence type="ECO:0000269" key="24">
    <source>
    </source>
</evidence>
<evidence type="ECO:0000269" key="25">
    <source>
    </source>
</evidence>
<evidence type="ECO:0000269" key="26">
    <source>
    </source>
</evidence>
<evidence type="ECO:0000269" key="27">
    <source>
    </source>
</evidence>
<evidence type="ECO:0000269" key="28">
    <source>
    </source>
</evidence>
<evidence type="ECO:0000269" key="29">
    <source>
    </source>
</evidence>
<evidence type="ECO:0000269" key="30">
    <source>
    </source>
</evidence>
<evidence type="ECO:0000269" key="31">
    <source>
    </source>
</evidence>
<evidence type="ECO:0000269" key="32">
    <source>
    </source>
</evidence>
<evidence type="ECO:0000269" key="33">
    <source>
    </source>
</evidence>
<evidence type="ECO:0000269" key="34">
    <source>
    </source>
</evidence>
<evidence type="ECO:0000269" key="35">
    <source>
    </source>
</evidence>
<evidence type="ECO:0000269" key="36">
    <source>
    </source>
</evidence>
<evidence type="ECO:0000269" key="37">
    <source ref="10"/>
</evidence>
<evidence type="ECO:0000269" key="38">
    <source ref="7"/>
</evidence>
<evidence type="ECO:0000269" key="39">
    <source ref="8"/>
</evidence>
<evidence type="ECO:0000303" key="40">
    <source>
    </source>
</evidence>
<evidence type="ECO:0000303" key="41">
    <source ref="5"/>
</evidence>
<evidence type="ECO:0000305" key="42"/>
<evidence type="ECO:0000305" key="43">
    <source>
    </source>
</evidence>
<evidence type="ECO:0000312" key="44">
    <source>
        <dbReference type="HGNC" id="HGNC:1037"/>
    </source>
</evidence>
<evidence type="ECO:0007744" key="45">
    <source>
        <dbReference type="PDB" id="1Q0P"/>
    </source>
</evidence>
<evidence type="ECO:0007744" key="46">
    <source>
        <dbReference type="PDB" id="1RRK"/>
    </source>
</evidence>
<evidence type="ECO:0007744" key="47">
    <source>
        <dbReference type="PDB" id="1RS0"/>
    </source>
</evidence>
<evidence type="ECO:0007744" key="48">
    <source>
        <dbReference type="PDB" id="1RTK"/>
    </source>
</evidence>
<evidence type="ECO:0007744" key="49">
    <source>
        <dbReference type="PDB" id="2WIN"/>
    </source>
</evidence>
<evidence type="ECO:0007744" key="50">
    <source>
        <dbReference type="PDB" id="2XWB"/>
    </source>
</evidence>
<evidence type="ECO:0007744" key="51">
    <source>
        <dbReference type="PDB" id="2XWJ"/>
    </source>
</evidence>
<evidence type="ECO:0007744" key="52">
    <source>
        <dbReference type="PDB" id="3HRZ"/>
    </source>
</evidence>
<evidence type="ECO:0007744" key="53">
    <source>
        <dbReference type="PDB" id="3HS0"/>
    </source>
</evidence>
<evidence type="ECO:0007744" key="54">
    <source>
        <dbReference type="PDB" id="6RUR"/>
    </source>
</evidence>
<evidence type="ECO:0007744" key="55">
    <source>
        <dbReference type="PDB" id="6RUV"/>
    </source>
</evidence>
<evidence type="ECO:0007829" key="56">
    <source>
        <dbReference type="PDB" id="1DLE"/>
    </source>
</evidence>
<evidence type="ECO:0007829" key="57">
    <source>
        <dbReference type="PDB" id="1Q0P"/>
    </source>
</evidence>
<evidence type="ECO:0007829" key="58">
    <source>
        <dbReference type="PDB" id="1RRK"/>
    </source>
</evidence>
<evidence type="ECO:0007829" key="59">
    <source>
        <dbReference type="PDB" id="1RTK"/>
    </source>
</evidence>
<evidence type="ECO:0007829" key="60">
    <source>
        <dbReference type="PDB" id="2OK5"/>
    </source>
</evidence>
<evidence type="ECO:0007829" key="61">
    <source>
        <dbReference type="PDB" id="2XWB"/>
    </source>
</evidence>
<evidence type="ECO:0007829" key="62">
    <source>
        <dbReference type="PDB" id="3HRZ"/>
    </source>
</evidence>
<evidence type="ECO:0007829" key="63">
    <source>
        <dbReference type="PDB" id="3HS0"/>
    </source>
</evidence>
<evidence type="ECO:0007829" key="64">
    <source>
        <dbReference type="PDB" id="7JTN"/>
    </source>
</evidence>
<evidence type="ECO:0007829" key="65">
    <source>
        <dbReference type="PDB" id="8ENU"/>
    </source>
</evidence>
<accession>P00751</accession>
<accession>B0QZQ6</accession>
<accession>O15006</accession>
<accession>Q29944</accession>
<accession>Q53F89</accession>
<accession>Q5JP67</accession>
<accession>Q5ST50</accession>
<accession>Q96HX6</accession>
<accession>Q9BTF5</accession>
<accession>Q9BX92</accession>
<dbReference type="EC" id="3.4.21.47" evidence="26 27 29 31 36"/>
<dbReference type="EMBL" id="X72875">
    <property type="protein sequence ID" value="CAA51389.1"/>
    <property type="molecule type" value="mRNA"/>
</dbReference>
<dbReference type="EMBL" id="S67310">
    <property type="protein sequence ID" value="AAD13989.1"/>
    <property type="molecule type" value="mRNA"/>
</dbReference>
<dbReference type="EMBL" id="L15702">
    <property type="protein sequence ID" value="AAA16820.1"/>
    <property type="molecule type" value="mRNA"/>
</dbReference>
<dbReference type="EMBL" id="X00284">
    <property type="protein sequence ID" value="CAA25077.1"/>
    <property type="molecule type" value="mRNA"/>
</dbReference>
<dbReference type="EMBL" id="AF349679">
    <property type="protein sequence ID" value="AAK30167.1"/>
    <property type="molecule type" value="mRNA"/>
</dbReference>
<dbReference type="EMBL" id="AF019413">
    <property type="protein sequence ID" value="AAB67977.1"/>
    <property type="molecule type" value="Genomic_DNA"/>
</dbReference>
<dbReference type="EMBL" id="AF551848">
    <property type="protein sequence ID" value="AAN71991.1"/>
    <property type="molecule type" value="Genomic_DNA"/>
</dbReference>
<dbReference type="EMBL" id="AL662849">
    <property type="status" value="NOT_ANNOTATED_CDS"/>
    <property type="molecule type" value="Genomic_DNA"/>
</dbReference>
<dbReference type="EMBL" id="AL844853">
    <property type="status" value="NOT_ANNOTATED_CDS"/>
    <property type="molecule type" value="Genomic_DNA"/>
</dbReference>
<dbReference type="EMBL" id="BX005143">
    <property type="status" value="NOT_ANNOTATED_CDS"/>
    <property type="molecule type" value="Genomic_DNA"/>
</dbReference>
<dbReference type="EMBL" id="CR388219">
    <property type="status" value="NOT_ANNOTATED_CDS"/>
    <property type="molecule type" value="Genomic_DNA"/>
</dbReference>
<dbReference type="EMBL" id="CR759782">
    <property type="status" value="NOT_ANNOTATED_CDS"/>
    <property type="molecule type" value="Genomic_DNA"/>
</dbReference>
<dbReference type="EMBL" id="AK223400">
    <property type="protein sequence ID" value="BAD97120.1"/>
    <property type="molecule type" value="mRNA"/>
</dbReference>
<dbReference type="EMBL" id="AL645922">
    <property type="status" value="NOT_ANNOTATED_CDS"/>
    <property type="molecule type" value="Genomic_DNA"/>
</dbReference>
<dbReference type="EMBL" id="CH471081">
    <property type="protein sequence ID" value="EAX03550.1"/>
    <property type="molecule type" value="Genomic_DNA"/>
</dbReference>
<dbReference type="EMBL" id="BC004143">
    <property type="protein sequence ID" value="AAH04143.1"/>
    <property type="molecule type" value="mRNA"/>
</dbReference>
<dbReference type="EMBL" id="BC007990">
    <property type="protein sequence ID" value="AAH07990.1"/>
    <property type="molecule type" value="mRNA"/>
</dbReference>
<dbReference type="EMBL" id="K01566">
    <property type="protein sequence ID" value="AAA36225.2"/>
    <property type="molecule type" value="mRNA"/>
</dbReference>
<dbReference type="EMBL" id="J00125">
    <property type="status" value="NOT_ANNOTATED_CDS"/>
    <property type="molecule type" value="Genomic_DNA"/>
</dbReference>
<dbReference type="EMBL" id="J00126">
    <property type="protein sequence ID" value="AAA36226.1"/>
    <property type="molecule type" value="mRNA"/>
</dbReference>
<dbReference type="EMBL" id="J00185">
    <property type="protein sequence ID" value="AAA36219.1"/>
    <property type="status" value="ALT_SEQ"/>
    <property type="molecule type" value="mRNA"/>
</dbReference>
<dbReference type="EMBL" id="J00186">
    <property type="protein sequence ID" value="AAA36220.1"/>
    <property type="molecule type" value="mRNA"/>
</dbReference>
<dbReference type="EMBL" id="M15082">
    <property type="protein sequence ID" value="AAA59625.1"/>
    <property type="molecule type" value="Genomic_DNA"/>
</dbReference>
<dbReference type="CCDS" id="CCDS4729.1">
    <molecule id="P00751-1"/>
</dbReference>
<dbReference type="PIR" id="S34075">
    <property type="entry name" value="BBHU"/>
</dbReference>
<dbReference type="RefSeq" id="NP_001701.2">
    <molecule id="P00751-1"/>
    <property type="nucleotide sequence ID" value="NM_001710.6"/>
</dbReference>
<dbReference type="PDB" id="1DLE">
    <property type="method" value="X-ray"/>
    <property type="resolution" value="2.10 A"/>
    <property type="chains" value="A/B=470-764"/>
</dbReference>
<dbReference type="PDB" id="1Q0P">
    <property type="method" value="X-ray"/>
    <property type="resolution" value="1.80 A"/>
    <property type="chains" value="A=254-476"/>
</dbReference>
<dbReference type="PDB" id="1RRK">
    <property type="method" value="X-ray"/>
    <property type="resolution" value="2.00 A"/>
    <property type="chains" value="A=268-764"/>
</dbReference>
<dbReference type="PDB" id="1RS0">
    <property type="method" value="X-ray"/>
    <property type="resolution" value="2.60 A"/>
    <property type="chains" value="A=268-764"/>
</dbReference>
<dbReference type="PDB" id="1RTK">
    <property type="method" value="X-ray"/>
    <property type="resolution" value="2.30 A"/>
    <property type="chains" value="A=268-764"/>
</dbReference>
<dbReference type="PDB" id="2OK5">
    <property type="method" value="X-ray"/>
    <property type="resolution" value="2.30 A"/>
    <property type="chains" value="A=26-764"/>
</dbReference>
<dbReference type="PDB" id="2WIN">
    <property type="method" value="X-ray"/>
    <property type="resolution" value="3.90 A"/>
    <property type="chains" value="I/J/K/L=260-764"/>
</dbReference>
<dbReference type="PDB" id="2XWB">
    <property type="method" value="X-ray"/>
    <property type="resolution" value="3.49 A"/>
    <property type="chains" value="F/H=35-764"/>
</dbReference>
<dbReference type="PDB" id="2XWJ">
    <property type="method" value="X-ray"/>
    <property type="resolution" value="4.00 A"/>
    <property type="chains" value="I/J/K/L=26-764"/>
</dbReference>
<dbReference type="PDB" id="3HRZ">
    <property type="method" value="X-ray"/>
    <property type="resolution" value="2.20 A"/>
    <property type="chains" value="D=26-764"/>
</dbReference>
<dbReference type="PDB" id="3HS0">
    <property type="method" value="X-ray"/>
    <property type="resolution" value="3.00 A"/>
    <property type="chains" value="D/I=26-764"/>
</dbReference>
<dbReference type="PDB" id="6QSW">
    <property type="method" value="X-ray"/>
    <property type="resolution" value="1.64 A"/>
    <property type="chains" value="AAA/BBB/CCC=474-764"/>
</dbReference>
<dbReference type="PDB" id="6QSX">
    <property type="method" value="X-ray"/>
    <property type="resolution" value="1.77 A"/>
    <property type="chains" value="AAA/BBB=474-764"/>
</dbReference>
<dbReference type="PDB" id="6RAV">
    <property type="method" value="X-ray"/>
    <property type="resolution" value="1.70 A"/>
    <property type="chains" value="AAA/BBB=474-764"/>
</dbReference>
<dbReference type="PDB" id="6RUR">
    <property type="method" value="X-ray"/>
    <property type="resolution" value="6.00 A"/>
    <property type="chains" value="J/L=260-764"/>
</dbReference>
<dbReference type="PDB" id="6RUV">
    <property type="method" value="X-ray"/>
    <property type="resolution" value="6.15 A"/>
    <property type="chains" value="J/L=260-764"/>
</dbReference>
<dbReference type="PDB" id="6T8U">
    <property type="method" value="X-ray"/>
    <property type="resolution" value="2.84 A"/>
    <property type="chains" value="AAA/BBB/CCC=474-764"/>
</dbReference>
<dbReference type="PDB" id="6T8V">
    <property type="method" value="X-ray"/>
    <property type="resolution" value="2.29 A"/>
    <property type="chains" value="AAA/BBB=474-764"/>
</dbReference>
<dbReference type="PDB" id="6T8W">
    <property type="method" value="X-ray"/>
    <property type="resolution" value="1.70 A"/>
    <property type="chains" value="AAA/BBB=474-764"/>
</dbReference>
<dbReference type="PDB" id="7JTN">
    <property type="method" value="X-ray"/>
    <property type="resolution" value="3.10 A"/>
    <property type="chains" value="A/C=1-764"/>
</dbReference>
<dbReference type="PDB" id="7JTQ">
    <property type="method" value="X-ray"/>
    <property type="resolution" value="3.50 A"/>
    <property type="chains" value="A/C=1-764"/>
</dbReference>
<dbReference type="PDB" id="7NOZ">
    <property type="method" value="X-ray"/>
    <property type="resolution" value="3.90 A"/>
    <property type="chains" value="F=35-764"/>
</dbReference>
<dbReference type="PDB" id="8ENU">
    <property type="method" value="EM"/>
    <property type="resolution" value="3.22 A"/>
    <property type="chains" value="D=2-764"/>
</dbReference>
<dbReference type="PDB" id="8EOK">
    <property type="method" value="EM"/>
    <property type="resolution" value="3.53 A"/>
    <property type="chains" value="D=2-764"/>
</dbReference>
<dbReference type="PDB" id="8UIN">
    <property type="method" value="EM"/>
    <property type="resolution" value="3.86 A"/>
    <property type="chains" value="J/X=260-487"/>
</dbReference>
<dbReference type="PDBsum" id="1DLE"/>
<dbReference type="PDBsum" id="1Q0P"/>
<dbReference type="PDBsum" id="1RRK"/>
<dbReference type="PDBsum" id="1RS0"/>
<dbReference type="PDBsum" id="1RTK"/>
<dbReference type="PDBsum" id="2OK5"/>
<dbReference type="PDBsum" id="2WIN"/>
<dbReference type="PDBsum" id="2XWB"/>
<dbReference type="PDBsum" id="2XWJ"/>
<dbReference type="PDBsum" id="3HRZ"/>
<dbReference type="PDBsum" id="3HS0"/>
<dbReference type="PDBsum" id="6QSW"/>
<dbReference type="PDBsum" id="6QSX"/>
<dbReference type="PDBsum" id="6RAV"/>
<dbReference type="PDBsum" id="6RUR"/>
<dbReference type="PDBsum" id="6RUV"/>
<dbReference type="PDBsum" id="6T8U"/>
<dbReference type="PDBsum" id="6T8V"/>
<dbReference type="PDBsum" id="6T8W"/>
<dbReference type="PDBsum" id="7JTN"/>
<dbReference type="PDBsum" id="7JTQ"/>
<dbReference type="PDBsum" id="7NOZ"/>
<dbReference type="PDBsum" id="8ENU"/>
<dbReference type="PDBsum" id="8EOK"/>
<dbReference type="PDBsum" id="8UIN"/>
<dbReference type="EMDB" id="EMD-2403"/>
<dbReference type="EMDB" id="EMD-28279"/>
<dbReference type="EMDB" id="EMD-28378"/>
<dbReference type="EMDB" id="EMD-42300"/>
<dbReference type="SMR" id="P00751"/>
<dbReference type="BioGRID" id="107098">
    <property type="interactions" value="52"/>
</dbReference>
<dbReference type="ComplexPortal" id="CPX-5381">
    <property type="entry name" value="Alternative pathway fluid-phase C3 convertase complex C3(H2O)Bb"/>
</dbReference>
<dbReference type="ComplexPortal" id="CPX-5601">
    <property type="entry name" value="Alternative pathway C3 convertase complex C3bBb"/>
</dbReference>
<dbReference type="DIP" id="DIP-38319N"/>
<dbReference type="FunCoup" id="P00751">
    <property type="interactions" value="224"/>
</dbReference>
<dbReference type="IntAct" id="P00751">
    <property type="interactions" value="34"/>
</dbReference>
<dbReference type="MINT" id="P00751"/>
<dbReference type="STRING" id="9606.ENSP00000416561"/>
<dbReference type="BindingDB" id="P00751"/>
<dbReference type="ChEMBL" id="CHEMBL5731"/>
<dbReference type="DrugBank" id="DB02459">
    <property type="generic name" value="4-guanidinobenzoic acid"/>
</dbReference>
<dbReference type="DrugBank" id="DB04491">
    <property type="generic name" value="Diisopropylphosphono Group"/>
</dbReference>
<dbReference type="DrugBank" id="DB16200">
    <property type="generic name" value="Iptacopan"/>
</dbReference>
<dbReference type="DrugBank" id="DB06503">
    <property type="generic name" value="MLN2222"/>
</dbReference>
<dbReference type="DrugBank" id="DB01593">
    <property type="generic name" value="Zinc"/>
</dbReference>
<dbReference type="DrugBank" id="DB14487">
    <property type="generic name" value="Zinc acetate"/>
</dbReference>
<dbReference type="GuidetoPHARMACOLOGY" id="2339"/>
<dbReference type="MEROPS" id="S01.196"/>
<dbReference type="CarbonylDB" id="P00751"/>
<dbReference type="GlyConnect" id="753">
    <property type="glycosylation" value="11 N-Linked glycans (4 sites)"/>
</dbReference>
<dbReference type="GlyCosmos" id="P00751">
    <property type="glycosylation" value="7 sites, 15 glycans"/>
</dbReference>
<dbReference type="GlyGen" id="P00751">
    <property type="glycosylation" value="8 sites, 77 N-linked glycans (4 sites), 4 O-linked glycans (3 sites)"/>
</dbReference>
<dbReference type="iPTMnet" id="P00751"/>
<dbReference type="PhosphoSitePlus" id="P00751"/>
<dbReference type="SwissPalm" id="P00751"/>
<dbReference type="BioMuta" id="CFB"/>
<dbReference type="DMDM" id="584908"/>
<dbReference type="REPRODUCTION-2DPAGE" id="P00751"/>
<dbReference type="CPTAC" id="non-CPTAC-1112"/>
<dbReference type="jPOST" id="P00751"/>
<dbReference type="MassIVE" id="P00751"/>
<dbReference type="PaxDb" id="9606-ENSP00000416561"/>
<dbReference type="PeptideAtlas" id="P00751"/>
<dbReference type="ProteomicsDB" id="51285">
    <molecule id="P00751-1"/>
</dbReference>
<dbReference type="ProteomicsDB" id="51286">
    <molecule id="P00751-2"/>
</dbReference>
<dbReference type="ABCD" id="P00751">
    <property type="antibodies" value="1 sequenced antibody"/>
</dbReference>
<dbReference type="Antibodypedia" id="35050">
    <property type="antibodies" value="944 antibodies from 43 providers"/>
</dbReference>
<dbReference type="DNASU" id="629"/>
<dbReference type="Ensembl" id="ENST00000399981.5">
    <property type="protein sequence ID" value="ENSP00000382862.1"/>
    <property type="gene ID" value="ENSG00000241253.8"/>
</dbReference>
<dbReference type="Ensembl" id="ENST00000417261.5">
    <molecule id="P00751-1"/>
    <property type="protein sequence ID" value="ENSP00000414889.1"/>
    <property type="gene ID" value="ENSG00000239754.9"/>
</dbReference>
<dbReference type="Ensembl" id="ENST00000419411.6">
    <molecule id="P00751-1"/>
    <property type="protein sequence ID" value="ENSP00000391902.2"/>
    <property type="gene ID" value="ENSG00000242335.8"/>
</dbReference>
<dbReference type="Ensembl" id="ENST00000419920.2">
    <property type="protein sequence ID" value="ENSP00000411474.2"/>
    <property type="gene ID" value="ENSG00000241253.8"/>
</dbReference>
<dbReference type="Ensembl" id="ENST00000424727.5">
    <molecule id="P00751-1"/>
    <property type="protein sequence ID" value="ENSP00000401719.1"/>
    <property type="gene ID" value="ENSG00000243570.9"/>
</dbReference>
<dbReference type="Ensembl" id="ENST00000425368.7">
    <molecule id="P00751-1"/>
    <property type="protein sequence ID" value="ENSP00000416561.2"/>
    <property type="gene ID" value="ENSG00000243649.10"/>
</dbReference>
<dbReference type="Ensembl" id="ENST00000426239.1">
    <molecule id="P00751-1"/>
    <property type="protein sequence ID" value="ENSP00000413351.1"/>
    <property type="gene ID" value="ENSG00000242335.8"/>
</dbReference>
<dbReference type="Ensembl" id="ENST00000427888.2">
    <molecule id="P00751-1"/>
    <property type="protein sequence ID" value="ENSP00000411515.2"/>
    <property type="gene ID" value="ENSG00000239754.9"/>
</dbReference>
<dbReference type="Ensembl" id="ENST00000433503.2">
    <molecule id="P00751-1"/>
    <property type="protein sequence ID" value="ENSP00000388352.2"/>
    <property type="gene ID" value="ENSG00000241534.9"/>
</dbReference>
<dbReference type="Ensembl" id="ENST00000436692.2">
    <molecule id="P00751-1"/>
    <property type="protein sequence ID" value="ENSP00000389604.2"/>
    <property type="gene ID" value="ENSG00000243570.9"/>
</dbReference>
<dbReference type="Ensembl" id="ENST00000455591.5">
    <molecule id="P00751-1"/>
    <property type="protein sequence ID" value="ENSP00000414341.1"/>
    <property type="gene ID" value="ENSG00000241534.9"/>
</dbReference>
<dbReference type="GeneID" id="629"/>
<dbReference type="KEGG" id="hsa:629"/>
<dbReference type="MANE-Select" id="ENST00000425368.7">
    <property type="protein sequence ID" value="ENSP00000416561.2"/>
    <property type="RefSeq nucleotide sequence ID" value="NM_001710.6"/>
    <property type="RefSeq protein sequence ID" value="NP_001701.2"/>
</dbReference>
<dbReference type="UCSC" id="uc003nyj.5">
    <molecule id="P00751-1"/>
    <property type="organism name" value="human"/>
</dbReference>
<dbReference type="AGR" id="HGNC:1037"/>
<dbReference type="CTD" id="629"/>
<dbReference type="DisGeNET" id="629"/>
<dbReference type="GeneCards" id="CFB"/>
<dbReference type="GeneReviews" id="CFB"/>
<dbReference type="HGNC" id="HGNC:1037">
    <property type="gene designation" value="CFB"/>
</dbReference>
<dbReference type="HPA" id="ENSG00000243649">
    <property type="expression patterns" value="Tissue enriched (liver)"/>
</dbReference>
<dbReference type="MalaCards" id="CFB"/>
<dbReference type="MIM" id="138470">
    <property type="type" value="gene"/>
</dbReference>
<dbReference type="MIM" id="612924">
    <property type="type" value="phenotype"/>
</dbReference>
<dbReference type="MIM" id="615489">
    <property type="type" value="phenotype"/>
</dbReference>
<dbReference type="MIM" id="615561">
    <property type="type" value="phenotype"/>
</dbReference>
<dbReference type="neXtProt" id="NX_P00751"/>
<dbReference type="OpenTargets" id="ENSG00000243649"/>
<dbReference type="Orphanet" id="544472">
    <property type="disease" value="Atypical hemolytic uremic syndrome with complement gene abnormality"/>
</dbReference>
<dbReference type="PharmGKB" id="PA25341"/>
<dbReference type="VEuPathDB" id="HostDB:ENSG00000243649"/>
<dbReference type="eggNOG" id="KOG3627">
    <property type="taxonomic scope" value="Eukaryota"/>
</dbReference>
<dbReference type="GeneTree" id="ENSGT00940000158605"/>
<dbReference type="HOGENOM" id="CLU_022004_1_0_1"/>
<dbReference type="InParanoid" id="P00751"/>
<dbReference type="OMA" id="PQKGHEN"/>
<dbReference type="OrthoDB" id="6127264at2759"/>
<dbReference type="PAN-GO" id="P00751">
    <property type="GO annotations" value="3 GO annotations based on evolutionary models"/>
</dbReference>
<dbReference type="PhylomeDB" id="P00751"/>
<dbReference type="TreeFam" id="TF330194"/>
<dbReference type="BRENDA" id="3.4.21.47">
    <property type="organism ID" value="2681"/>
</dbReference>
<dbReference type="PathwayCommons" id="P00751"/>
<dbReference type="Reactome" id="R-HSA-173736">
    <property type="pathway name" value="Alternative complement activation"/>
</dbReference>
<dbReference type="Reactome" id="R-HSA-174577">
    <property type="pathway name" value="Activation of C3 and C5"/>
</dbReference>
<dbReference type="Reactome" id="R-HSA-977606">
    <property type="pathway name" value="Regulation of Complement cascade"/>
</dbReference>
<dbReference type="SignaLink" id="P00751"/>
<dbReference type="SIGNOR" id="P00751"/>
<dbReference type="BioGRID-ORCS" id="629">
    <property type="hits" value="18 hits in 1149 CRISPR screens"/>
</dbReference>
<dbReference type="ChiTaRS" id="CFB">
    <property type="organism name" value="human"/>
</dbReference>
<dbReference type="EvolutionaryTrace" id="P00751"/>
<dbReference type="GeneWiki" id="Complement_factor_B"/>
<dbReference type="GenomeRNAi" id="629"/>
<dbReference type="Pharos" id="P00751">
    <property type="development level" value="Tchem"/>
</dbReference>
<dbReference type="PRO" id="PR:P00751"/>
<dbReference type="Proteomes" id="UP000005640">
    <property type="component" value="Chromosome 6"/>
</dbReference>
<dbReference type="RNAct" id="P00751">
    <property type="molecule type" value="protein"/>
</dbReference>
<dbReference type="Bgee" id="ENSG00000243649">
    <property type="expression patterns" value="Expressed in right lobe of liver and 99 other cell types or tissues"/>
</dbReference>
<dbReference type="ExpressionAtlas" id="P00751">
    <property type="expression patterns" value="baseline and differential"/>
</dbReference>
<dbReference type="GO" id="GO:0072562">
    <property type="term" value="C:blood microparticle"/>
    <property type="evidence" value="ECO:0007005"/>
    <property type="project" value="UniProtKB"/>
</dbReference>
<dbReference type="GO" id="GO:0070062">
    <property type="term" value="C:extracellular exosome"/>
    <property type="evidence" value="ECO:0007005"/>
    <property type="project" value="UniProtKB"/>
</dbReference>
<dbReference type="GO" id="GO:0005576">
    <property type="term" value="C:extracellular region"/>
    <property type="evidence" value="ECO:0000304"/>
    <property type="project" value="Reactome"/>
</dbReference>
<dbReference type="GO" id="GO:0005615">
    <property type="term" value="C:extracellular space"/>
    <property type="evidence" value="ECO:0007005"/>
    <property type="project" value="UniProtKB"/>
</dbReference>
<dbReference type="GO" id="GO:0005886">
    <property type="term" value="C:plasma membrane"/>
    <property type="evidence" value="ECO:0000304"/>
    <property type="project" value="Reactome"/>
</dbReference>
<dbReference type="GO" id="GO:0001848">
    <property type="term" value="F:complement binding"/>
    <property type="evidence" value="ECO:0000304"/>
    <property type="project" value="UniProtKB"/>
</dbReference>
<dbReference type="GO" id="GO:0004252">
    <property type="term" value="F:serine-type endopeptidase activity"/>
    <property type="evidence" value="ECO:0000304"/>
    <property type="project" value="Reactome"/>
</dbReference>
<dbReference type="GO" id="GO:0006956">
    <property type="term" value="P:complement activation"/>
    <property type="evidence" value="ECO:0000318"/>
    <property type="project" value="GO_Central"/>
</dbReference>
<dbReference type="GO" id="GO:0006957">
    <property type="term" value="P:complement activation, alternative pathway"/>
    <property type="evidence" value="ECO:0000304"/>
    <property type="project" value="Reactome"/>
</dbReference>
<dbReference type="GO" id="GO:0006508">
    <property type="term" value="P:proteolysis"/>
    <property type="evidence" value="ECO:0007669"/>
    <property type="project" value="UniProtKB-KW"/>
</dbReference>
<dbReference type="GO" id="GO:0009617">
    <property type="term" value="P:response to bacterium"/>
    <property type="evidence" value="ECO:0000318"/>
    <property type="project" value="GO_Central"/>
</dbReference>
<dbReference type="CDD" id="cd00033">
    <property type="entry name" value="CCP"/>
    <property type="match status" value="3"/>
</dbReference>
<dbReference type="CDD" id="cd00190">
    <property type="entry name" value="Tryp_SPc"/>
    <property type="match status" value="1"/>
</dbReference>
<dbReference type="CDD" id="cd01470">
    <property type="entry name" value="vWA_complement_factors"/>
    <property type="match status" value="1"/>
</dbReference>
<dbReference type="FunFam" id="2.10.70.10:FF:000052">
    <property type="entry name" value="Complement factor B"/>
    <property type="match status" value="1"/>
</dbReference>
<dbReference type="FunFam" id="2.40.10.120:FF:000009">
    <property type="entry name" value="Complement factor B"/>
    <property type="match status" value="1"/>
</dbReference>
<dbReference type="FunFam" id="3.40.50.410:FF:000056">
    <property type="entry name" value="Complement factor B"/>
    <property type="match status" value="1"/>
</dbReference>
<dbReference type="FunFam" id="2.10.70.10:FF:000019">
    <property type="entry name" value="Complement factor b,-like"/>
    <property type="match status" value="2"/>
</dbReference>
<dbReference type="Gene3D" id="2.40.10.120">
    <property type="match status" value="1"/>
</dbReference>
<dbReference type="Gene3D" id="2.10.70.10">
    <property type="entry name" value="Complement Module, domain 1"/>
    <property type="match status" value="3"/>
</dbReference>
<dbReference type="Gene3D" id="3.40.50.410">
    <property type="entry name" value="von Willebrand factor, type A domain"/>
    <property type="match status" value="1"/>
</dbReference>
<dbReference type="InterPro" id="IPR011360">
    <property type="entry name" value="Compl_C2_B"/>
</dbReference>
<dbReference type="InterPro" id="IPR028341">
    <property type="entry name" value="Complement_B"/>
</dbReference>
<dbReference type="InterPro" id="IPR009003">
    <property type="entry name" value="Peptidase_S1_PA"/>
</dbReference>
<dbReference type="InterPro" id="IPR001314">
    <property type="entry name" value="Peptidase_S1A"/>
</dbReference>
<dbReference type="InterPro" id="IPR035976">
    <property type="entry name" value="Sushi/SCR/CCP_sf"/>
</dbReference>
<dbReference type="InterPro" id="IPR000436">
    <property type="entry name" value="Sushi_SCR_CCP_dom"/>
</dbReference>
<dbReference type="InterPro" id="IPR001254">
    <property type="entry name" value="Trypsin_dom"/>
</dbReference>
<dbReference type="InterPro" id="IPR018114">
    <property type="entry name" value="TRYPSIN_HIS"/>
</dbReference>
<dbReference type="InterPro" id="IPR033116">
    <property type="entry name" value="TRYPSIN_SER"/>
</dbReference>
<dbReference type="InterPro" id="IPR002035">
    <property type="entry name" value="VWF_A"/>
</dbReference>
<dbReference type="InterPro" id="IPR036465">
    <property type="entry name" value="vWFA_dom_sf"/>
</dbReference>
<dbReference type="PANTHER" id="PTHR46393:SF1">
    <property type="entry name" value="COMPLEMENT FACTOR B"/>
    <property type="match status" value="1"/>
</dbReference>
<dbReference type="PANTHER" id="PTHR46393">
    <property type="entry name" value="SUSHI DOMAIN-CONTAINING PROTEIN"/>
    <property type="match status" value="1"/>
</dbReference>
<dbReference type="Pfam" id="PF00084">
    <property type="entry name" value="Sushi"/>
    <property type="match status" value="3"/>
</dbReference>
<dbReference type="Pfam" id="PF00089">
    <property type="entry name" value="Trypsin"/>
    <property type="match status" value="1"/>
</dbReference>
<dbReference type="Pfam" id="PF00092">
    <property type="entry name" value="VWA"/>
    <property type="match status" value="1"/>
</dbReference>
<dbReference type="PIRSF" id="PIRSF001154">
    <property type="entry name" value="Compl_C2_B"/>
    <property type="match status" value="1"/>
</dbReference>
<dbReference type="PIRSF" id="PIRSF500181">
    <property type="entry name" value="Complement_B"/>
    <property type="match status" value="1"/>
</dbReference>
<dbReference type="PRINTS" id="PR00722">
    <property type="entry name" value="CHYMOTRYPSIN"/>
</dbReference>
<dbReference type="PRINTS" id="PR00453">
    <property type="entry name" value="VWFADOMAIN"/>
</dbReference>
<dbReference type="SMART" id="SM00032">
    <property type="entry name" value="CCP"/>
    <property type="match status" value="3"/>
</dbReference>
<dbReference type="SMART" id="SM00020">
    <property type="entry name" value="Tryp_SPc"/>
    <property type="match status" value="1"/>
</dbReference>
<dbReference type="SMART" id="SM00327">
    <property type="entry name" value="VWA"/>
    <property type="match status" value="1"/>
</dbReference>
<dbReference type="SUPFAM" id="SSF57535">
    <property type="entry name" value="Complement control module/SCR domain"/>
    <property type="match status" value="3"/>
</dbReference>
<dbReference type="SUPFAM" id="SSF50494">
    <property type="entry name" value="Trypsin-like serine proteases"/>
    <property type="match status" value="1"/>
</dbReference>
<dbReference type="SUPFAM" id="SSF53300">
    <property type="entry name" value="vWA-like"/>
    <property type="match status" value="1"/>
</dbReference>
<dbReference type="PROSITE" id="PS50923">
    <property type="entry name" value="SUSHI"/>
    <property type="match status" value="3"/>
</dbReference>
<dbReference type="PROSITE" id="PS50240">
    <property type="entry name" value="TRYPSIN_DOM"/>
    <property type="match status" value="1"/>
</dbReference>
<dbReference type="PROSITE" id="PS00134">
    <property type="entry name" value="TRYPSIN_HIS"/>
    <property type="match status" value="1"/>
</dbReference>
<dbReference type="PROSITE" id="PS00135">
    <property type="entry name" value="TRYPSIN_SER"/>
    <property type="match status" value="1"/>
</dbReference>
<dbReference type="PROSITE" id="PS50234">
    <property type="entry name" value="VWFA"/>
    <property type="match status" value="1"/>
</dbReference>
<sequence length="764" mass="85533">MGSNLSPQLCLMPFILGLLSGGVTTTPWSLARPQGSCSLEGVEIKGGSFRLLQEGQALEYVCPSGFYPYPVQTRTCRSTGSWSTLKTQDQKTVRKAECRAIHCPRPHDFENGEYWPRSPYYNVSDEISFHCYDGYTLRGSANRTCQVNGRWSGQTAICDNGAGYCSNPGIPIGTRKVGSQYRLEDSVTYHCSRGLTLRGSQRRTCQEGGSWSGTEPSCQDSFMYDTPQEVAEAFLSSLTETIEGVDAEDGHGPGEQQKRKIVLDPSGSMNIYLVLDGSDSIGASNFTGAKKCLVNLIEKVASYGVKPRYGLVTYATYPKIWVKVSEADSSNADWVTKQLNEINYEDHKLKSGTNTKKALQAVYSMMSWPDDVPPEGWNRTRHVIILMTDGLHNMGGDPITVIDEIRDLLYIGKDRKNPREDYLDVYVFGVGPLVNQVNINALASKKDNEQHVFKVKDMENLEDVFYQMIDESQSLSLCGMVWEHRKGTDYHKQPWQAKISVIRPSKGHESCMGAVVSEYFVLTAAHCFTVDDKEHSIKVSVGGEKRDLEIEVVLFHPNYNINGKKEAGIPEFYDYDVALIKLKNKLKYGQTIRPICLPCTEGTTRALRLPPTTTCQQQKEELLPAQDIKALFVSEEEKKLTRKEVYIKNGDKKGSCERDAQYAPGYDKVKDISEVVTPRFLCTGGVSPYADPNTCRGDSGGPLIVHKRSRFIQVGVISWGVVDVCKNQKRQKQVPAHARDFHINLFQVLPWLKEKLQDEDLGFL</sequence>
<keyword id="KW-0002">3D-structure</keyword>
<keyword id="KW-0913">Age-related macular degeneration</keyword>
<keyword id="KW-0025">Alternative splicing</keyword>
<keyword id="KW-0165">Cleavage on pair of basic residues</keyword>
<keyword id="KW-0179">Complement alternate pathway</keyword>
<keyword id="KW-0903">Direct protein sequencing</keyword>
<keyword id="KW-0225">Disease variant</keyword>
<keyword id="KW-1015">Disulfide bond</keyword>
<keyword id="KW-0971">Glycation</keyword>
<keyword id="KW-0325">Glycoprotein</keyword>
<keyword id="KW-1068">Hemolytic uremic syndrome</keyword>
<keyword id="KW-0378">Hydrolase</keyword>
<keyword id="KW-0391">Immunity</keyword>
<keyword id="KW-0399">Innate immunity</keyword>
<keyword id="KW-0645">Protease</keyword>
<keyword id="KW-1267">Proteomics identification</keyword>
<keyword id="KW-1185">Reference proteome</keyword>
<keyword id="KW-0677">Repeat</keyword>
<keyword id="KW-0964">Secreted</keyword>
<keyword id="KW-0720">Serine protease</keyword>
<keyword id="KW-0732">Signal</keyword>
<keyword id="KW-0768">Sushi</keyword>
<keyword id="KW-0865">Zymogen</keyword>
<gene>
    <name evidence="44" type="primary">CFB</name>
    <name type="synonym">BF</name>
    <name type="synonym">BFD</name>
</gene>
<comment type="function">
    <text evidence="26 27 29 30 31 36">Precursor of the catalytic component of the C3 and C5 convertase complexes of the alternative pathway of the complement system, a cascade of proteins that leads to phagocytosis and breakdown of pathogens and signaling that strengthens the adaptive immune system (PubMed:3638964, PubMed:624565, PubMed:6554279, PubMed:6919543, PubMed:9748277). The alternative complement pathway acts as an amplification loop that enhances other complement pathways (classical, lectin and GZMK) by promoting formation of additional C3 and C5 convertases (PubMed:3638964, PubMed:624565, PubMed:6554279, PubMed:6919543, PubMed:9748277). CFB is cleaved and activated by CFD to generate Ba and Bb chains; Bb chain constituting the catalytic component of the C3 and C5 convertases (PubMed:6769474, PubMed:9748277).</text>
</comment>
<comment type="function">
    <molecule>Complement factor B Bb</molecule>
    <text evidence="23 26 27 29 31 36">Serine protease component of the complement C3 and C5 convertase complexes of the alternative complement pathway (PubMed:30643019, PubMed:3638964, PubMed:624565, PubMed:6554279, PubMed:6919543). Following cleavage and activation by factor D (CFD), forms the C3 convertase together with complement C3b (PubMed:3638964, PubMed:624565, PubMed:6554279, PubMed:6919543, PubMed:9748277). As part of the C3 convertase, cleaves and activates C3 into C3a anaphylatoxin and C3b opsonin, the next components of the complement pathways (PubMed:3638964, PubMed:624565, PubMed:6554279, PubMed:6919543, PubMed:9748277). When an additional complement C3b molecule binds to the C3 convertase, forms the C5 convertase, which cleaves and activates C5 into C5a anaphylatoxin and C5b component of the membrane attack complex (PubMed:30643019, PubMed:624565, PubMed:6554279).</text>
</comment>
<comment type="function">
    <molecule>Complement factor B Ba</molecule>
    <text evidence="25">Involved in proliferation and differentiation of preactivated B-lymphocytes, rapid spreading of peripheral blood monocytes, stimulation of lymphocyte blastogenesis and lysis of erythrocytes.</text>
</comment>
<comment type="catalytic activity">
    <molecule>Complement factor B Bb</molecule>
    <reaction evidence="26 27 29 31 36">
        <text>Cleavage of Arg-|-Ser bond in complement component C3 alpha-chain to yield C3a and C3b, and Arg-|-Xaa bond in complement component C5 alpha-chain to yield C5a and C5b.</text>
        <dbReference type="EC" id="3.4.21.47"/>
    </reaction>
</comment>
<comment type="cofactor">
    <molecule>Complement factor B Bb</molecule>
    <cofactor evidence="7 15 16 19 26">
        <name>Mg(2+)</name>
        <dbReference type="ChEBI" id="CHEBI:18420"/>
    </cofactor>
    <cofactor evidence="6">
        <name>Mn(2+)</name>
        <dbReference type="ChEBI" id="CHEBI:29035"/>
    </cofactor>
</comment>
<comment type="biophysicochemical properties">
    <molecule>Complement factor B Bb</molecule>
    <kinetics>
        <KM evidence="26">5.86 uM for complement C3</KM>
        <text evidence="26">kcat is 1.78 sec(-1) with complement C3 as substrate.</text>
    </kinetics>
</comment>
<comment type="subunit">
    <text evidence="16 22 24">Monomer (PubMed:19574954). Interacts with complement C3b; this interaction is dependent on the presence of Mg(2+) (PubMed:28264884, PubMed:31507604).</text>
</comment>
<comment type="subunit">
    <molecule>Complement factor B Bb</molecule>
    <text evidence="9 22 23 24 26 27 29 36">Catalytic component of the C3 convertase of the alternative complement pathway, also named C3bBb, composed of complement factor B Bb and complement C3b (PubMed:28264884, PubMed:31507604, PubMed:3638964, PubMed:9748277). Catalytic component of the C5 convertase of the alternative complement pathway, also named C3bBb3b, composed of complement factor B Bb and additional molecules of complement C3b (PubMed:30643019, PubMed:624565, PubMed:6554279). Interacts to CFP; this interaction contributes to the stabilization of the active C3-convertase enzyme complex (PubMed:16301317, PubMed:31507604, PubMed:9748277).</text>
</comment>
<comment type="interaction">
    <interactant intactId="EBI-1223668">
        <id>P00751</id>
    </interactant>
    <interactant intactId="EBI-905851">
        <id>P01024</id>
        <label>C3</label>
    </interactant>
    <organismsDiffer>false</organismsDiffer>
    <experiments>3</experiments>
</comment>
<comment type="interaction">
    <interactant intactId="EBI-1223668">
        <id>P00751</id>
    </interactant>
    <interactant intactId="EBI-22033617">
        <id>Q92496-1</id>
        <label>CFHR4</label>
    </interactant>
    <organismsDiffer>false</organismsDiffer>
    <experiments>2</experiments>
</comment>
<comment type="interaction">
    <interactant intactId="EBI-1223668">
        <id>P00751</id>
    </interactant>
    <interactant intactId="EBI-22033638">
        <id>Q92496-3</id>
        <label>CFHR4</label>
    </interactant>
    <organismsDiffer>false</organismsDiffer>
    <experiments>2</experiments>
</comment>
<comment type="subcellular location">
    <subcellularLocation>
        <location evidence="30">Secreted</location>
    </subcellularLocation>
</comment>
<comment type="subcellular location">
    <molecule>Complement factor B Bb</molecule>
    <subcellularLocation>
        <location evidence="23">Cell surface</location>
    </subcellularLocation>
    <text evidence="23">Recruited to the surface of pathogens by complement C3b opsonin.</text>
</comment>
<comment type="alternative products">
    <event type="alternative splicing"/>
    <isoform>
        <id>P00751-1</id>
        <name>1</name>
        <sequence type="displayed"/>
    </isoform>
    <isoform>
        <id>P00751-2</id>
        <name>2</name>
        <sequence type="described" ref="VSP_005380 VSP_005381"/>
    </isoform>
</comment>
<comment type="domain">
    <text evidence="13">The unliganded VWA domain has an inactive 'locked' conformation whereby the scissile Arg-259|Lys-260 bond is protected from proteolytic activation.</text>
</comment>
<comment type="PTM">
    <text evidence="19 30 35 36">Cleaved by CFD following activation of the alternative complement system, generating Ba and Bb chains (PubMed:21205667, PubMed:6769474, PubMed:874324, PubMed:9748277). Cleavage and activation takes place when CFB is already associated with complement C3b (PubMed:21205667).</text>
</comment>
<comment type="polymorphism">
    <text evidence="20 32">Two major variants, F and S, and 2 minor variants, as well as at least 14 very rare variants, have been identified.</text>
</comment>
<comment type="disease" evidence="11">
    <disease id="DI-03919">
        <name>Macular degeneration, age-related, 14</name>
        <acronym>ARMD14</acronym>
        <description>A form of age-related macular degeneration, a multifactorial eye disease and the most common cause of irreversible vision loss in the developed world. In most patients, the disease is manifest as ophthalmoscopically visible yellowish accumulations of protein and lipid that lie beneath the retinal pigment epithelium and within an elastin-containing structure known as Bruch membrane.</description>
        <dbReference type="MIM" id="615489"/>
    </disease>
    <text evidence="11">Disease susceptibility may be associated with variants affecting the gene represented in this entry. Haplotype analyzes have identified a statistically significant common risk haplotype and two protective haplotypes. CFB variant His-9 and C2 variant Asp-318, as well as CFB variant Gln-32 and a variant in intron 10 of C2, confer a significantly reduced risk of AMD.</text>
</comment>
<comment type="disease" evidence="12 18">
    <disease id="DI-02599">
        <name>Hemolytic uremic syndrome, atypical, 4</name>
        <acronym>AHUS4</acronym>
        <description>An atypical form of hemolytic uremic syndrome. It is a complex genetic disease characterized by microangiopathic hemolytic anemia, thrombocytopenia, renal failure and absence of episodes of enterocolitis and diarrhea. In contrast to typical hemolytic uremic syndrome, atypical forms have a poorer prognosis, with higher death rates and frequent progression to end-stage renal disease.</description>
        <dbReference type="MIM" id="612924"/>
    </disease>
    <text>Disease susceptibility is associated with variants affecting the gene represented in this entry. Susceptibility to the development of atypical hemolytic uremic syndrome can be conferred by mutations in various components of or regulatory factors in the complement cascade system. Other genes may play a role in modifying the phenotype.</text>
</comment>
<comment type="disease" evidence="21">
    <disease id="DI-04018">
        <name>Complement factor B deficiency</name>
        <acronym>CFBD</acronym>
        <description>An immunologic disorder characterized by increased susceptibility to bacterial infections, particularly Neisseria infections, due to a defect in the alternative complement pathway.</description>
        <dbReference type="MIM" id="615561"/>
    </disease>
    <text>The disease is caused by variants affecting the gene represented in this entry.</text>
</comment>
<comment type="similarity">
    <text evidence="2">Belongs to the peptidase S1 family.</text>
</comment>
<protein>
    <recommendedName>
        <fullName evidence="40">Complement factor B</fullName>
        <ecNumber evidence="26 27 29 31 36">3.4.21.47</ecNumber>
    </recommendedName>
    <alternativeName>
        <fullName>C3/C5 convertase</fullName>
    </alternativeName>
    <alternativeName>
        <fullName>Glycine-rich beta glycoprotein</fullName>
        <shortName>GBG</shortName>
    </alternativeName>
    <alternativeName>
        <fullName>PBF2</fullName>
    </alternativeName>
    <alternativeName>
        <fullName>Properdin factor B</fullName>
    </alternativeName>
    <component>
        <recommendedName>
            <fullName>Complement factor B Ba</fullName>
            <shortName>Ba</shortName>
        </recommendedName>
    </component>
    <component>
        <recommendedName>
            <fullName>Complement factor B Bb</fullName>
            <shortName>Bb</shortName>
        </recommendedName>
    </component>
</protein>
<name>CFAB_HUMAN</name>
<proteinExistence type="evidence at protein level"/>
<reference key="1">
    <citation type="journal article" date="1990" name="Immunogenetics">
        <title>Molecular characterization of human complement factor B subtypes.</title>
        <authorList>
            <person name="Davrinche C."/>
            <person name="Abbal M."/>
            <person name="Clerc A."/>
        </authorList>
    </citation>
    <scope>NUCLEOTIDE SEQUENCE [MRNA] (ISOFORM 1)</scope>
    <scope>VARIANTS ARG-28; GLN-28; GLN-32 AND SER-736</scope>
</reference>
<reference key="2">
    <citation type="journal article" date="1994" name="Hum. Immunol.">
        <title>Human factor B. Complete cDNA sequence of the BF*S allele.</title>
        <authorList>
            <person name="Mejia J.E."/>
            <person name="Jahn I."/>
            <person name="de la Salle H."/>
            <person name="Hauptmann G."/>
        </authorList>
    </citation>
    <scope>NUCLEOTIDE SEQUENCE [MRNA] (ISOFORM 1)</scope>
    <scope>VARIANTS ARG-28 AND GLN-32</scope>
    <source>
        <tissue>Liver</tissue>
    </source>
</reference>
<reference key="3">
    <citation type="journal article" date="1993" name="Immunobiology">
        <title>Human complement factor B: functional properties of a recombinant zymogen of the alternative activation pathway convertase.</title>
        <authorList>
            <person name="Schwaeble W."/>
            <person name="Luettig B."/>
            <person name="Sokolowski T."/>
            <person name="Estaller C."/>
            <person name="Weiss E.H."/>
            <person name="Meyer Zum Bueschenfelde K.-H."/>
            <person name="Whaley K."/>
            <person name="Dippold W."/>
        </authorList>
    </citation>
    <scope>NUCLEOTIDE SEQUENCE [MRNA] (ISOFORM 1)</scope>
    <scope>VARIANTS ARG-28 AND GLN-32</scope>
    <source>
        <tissue>Liver</tissue>
    </source>
</reference>
<reference key="4">
    <citation type="journal article" date="1993" name="Mol. Immunol.">
        <title>Human complement factor B: cDNA cloning, nucleotide sequencing, phenotypic conversion by site-directed mutagenesis and expression.</title>
        <authorList>
            <person name="Horiuchi T."/>
            <person name="Kim S."/>
            <person name="Matsumoto M."/>
            <person name="Watanabe I."/>
            <person name="Fujita S."/>
            <person name="Volanakis J.E."/>
        </authorList>
    </citation>
    <scope>NUCLEOTIDE SEQUENCE [MRNA] (ISOFORM 1)</scope>
    <scope>VARIANTS ARG-28 AND GLN-32</scope>
</reference>
<reference key="5">
    <citation type="submission" date="2001-02" db="EMBL/GenBank/DDBJ databases">
        <title>Expression and alternative splicing of human factor B gene in leukemic mononuclear cells.</title>
        <authorList>
            <person name="Jaatinen T."/>
            <person name="Kanerva J."/>
            <person name="Poutanen K.E."/>
            <person name="Saarinen-Pihkala U."/>
            <person name="Lokki M.-L."/>
        </authorList>
    </citation>
    <scope>NUCLEOTIDE SEQUENCE [MRNA] (ISOFORM 2)</scope>
</reference>
<reference key="6">
    <citation type="journal article" date="2003" name="Genome Res.">
        <title>Analysis of the gene-dense major histocompatibility complex class III region and its comparison to mouse.</title>
        <authorList>
            <person name="Xie T."/>
            <person name="Rowen L."/>
            <person name="Aguado B."/>
            <person name="Ahearn M.E."/>
            <person name="Madan A."/>
            <person name="Qin S."/>
            <person name="Campbell R.D."/>
            <person name="Hood L."/>
        </authorList>
    </citation>
    <scope>NUCLEOTIDE SEQUENCE [LARGE SCALE GENOMIC DNA]</scope>
</reference>
<reference key="7">
    <citation type="submission" date="2002-11" db="EMBL/GenBank/DDBJ databases">
        <authorList>
            <consortium name="SeattleSNPs variation discovery resource"/>
        </authorList>
    </citation>
    <scope>NUCLEOTIDE SEQUENCE [GENOMIC DNA]</scope>
    <scope>VARIANTS HIS-9; GLN-32; TRP-32; SER-252; GLU-565 AND GLU-651</scope>
</reference>
<reference key="8">
    <citation type="submission" date="2005-04" db="EMBL/GenBank/DDBJ databases">
        <authorList>
            <person name="Totoki Y."/>
            <person name="Toyoda A."/>
            <person name="Takeda T."/>
            <person name="Sakaki Y."/>
            <person name="Tanaka A."/>
            <person name="Yokoyama S."/>
        </authorList>
    </citation>
    <scope>NUCLEOTIDE SEQUENCE [LARGE SCALE MRNA] (ISOFORM 1)</scope>
    <scope>VARIANT TRP-32</scope>
</reference>
<reference key="9">
    <citation type="journal article" date="2003" name="Nature">
        <title>The DNA sequence and analysis of human chromosome 6.</title>
        <authorList>
            <person name="Mungall A.J."/>
            <person name="Palmer S.A."/>
            <person name="Sims S.K."/>
            <person name="Edwards C.A."/>
            <person name="Ashurst J.L."/>
            <person name="Wilming L."/>
            <person name="Jones M.C."/>
            <person name="Horton R."/>
            <person name="Hunt S.E."/>
            <person name="Scott C.E."/>
            <person name="Gilbert J.G.R."/>
            <person name="Clamp M.E."/>
            <person name="Bethel G."/>
            <person name="Milne S."/>
            <person name="Ainscough R."/>
            <person name="Almeida J.P."/>
            <person name="Ambrose K.D."/>
            <person name="Andrews T.D."/>
            <person name="Ashwell R.I.S."/>
            <person name="Babbage A.K."/>
            <person name="Bagguley C.L."/>
            <person name="Bailey J."/>
            <person name="Banerjee R."/>
            <person name="Barker D.J."/>
            <person name="Barlow K.F."/>
            <person name="Bates K."/>
            <person name="Beare D.M."/>
            <person name="Beasley H."/>
            <person name="Beasley O."/>
            <person name="Bird C.P."/>
            <person name="Blakey S.E."/>
            <person name="Bray-Allen S."/>
            <person name="Brook J."/>
            <person name="Brown A.J."/>
            <person name="Brown J.Y."/>
            <person name="Burford D.C."/>
            <person name="Burrill W."/>
            <person name="Burton J."/>
            <person name="Carder C."/>
            <person name="Carter N.P."/>
            <person name="Chapman J.C."/>
            <person name="Clark S.Y."/>
            <person name="Clark G."/>
            <person name="Clee C.M."/>
            <person name="Clegg S."/>
            <person name="Cobley V."/>
            <person name="Collier R.E."/>
            <person name="Collins J.E."/>
            <person name="Colman L.K."/>
            <person name="Corby N.R."/>
            <person name="Coville G.J."/>
            <person name="Culley K.M."/>
            <person name="Dhami P."/>
            <person name="Davies J."/>
            <person name="Dunn M."/>
            <person name="Earthrowl M.E."/>
            <person name="Ellington A.E."/>
            <person name="Evans K.A."/>
            <person name="Faulkner L."/>
            <person name="Francis M.D."/>
            <person name="Frankish A."/>
            <person name="Frankland J."/>
            <person name="French L."/>
            <person name="Garner P."/>
            <person name="Garnett J."/>
            <person name="Ghori M.J."/>
            <person name="Gilby L.M."/>
            <person name="Gillson C.J."/>
            <person name="Glithero R.J."/>
            <person name="Grafham D.V."/>
            <person name="Grant M."/>
            <person name="Gribble S."/>
            <person name="Griffiths C."/>
            <person name="Griffiths M.N.D."/>
            <person name="Hall R."/>
            <person name="Halls K.S."/>
            <person name="Hammond S."/>
            <person name="Harley J.L."/>
            <person name="Hart E.A."/>
            <person name="Heath P.D."/>
            <person name="Heathcott R."/>
            <person name="Holmes S.J."/>
            <person name="Howden P.J."/>
            <person name="Howe K.L."/>
            <person name="Howell G.R."/>
            <person name="Huckle E."/>
            <person name="Humphray S.J."/>
            <person name="Humphries M.D."/>
            <person name="Hunt A.R."/>
            <person name="Johnson C.M."/>
            <person name="Joy A.A."/>
            <person name="Kay M."/>
            <person name="Keenan S.J."/>
            <person name="Kimberley A.M."/>
            <person name="King A."/>
            <person name="Laird G.K."/>
            <person name="Langford C."/>
            <person name="Lawlor S."/>
            <person name="Leongamornlert D.A."/>
            <person name="Leversha M."/>
            <person name="Lloyd C.R."/>
            <person name="Lloyd D.M."/>
            <person name="Loveland J.E."/>
            <person name="Lovell J."/>
            <person name="Martin S."/>
            <person name="Mashreghi-Mohammadi M."/>
            <person name="Maslen G.L."/>
            <person name="Matthews L."/>
            <person name="McCann O.T."/>
            <person name="McLaren S.J."/>
            <person name="McLay K."/>
            <person name="McMurray A."/>
            <person name="Moore M.J.F."/>
            <person name="Mullikin J.C."/>
            <person name="Niblett D."/>
            <person name="Nickerson T."/>
            <person name="Novik K.L."/>
            <person name="Oliver K."/>
            <person name="Overton-Larty E.K."/>
            <person name="Parker A."/>
            <person name="Patel R."/>
            <person name="Pearce A.V."/>
            <person name="Peck A.I."/>
            <person name="Phillimore B.J.C.T."/>
            <person name="Phillips S."/>
            <person name="Plumb R.W."/>
            <person name="Porter K.M."/>
            <person name="Ramsey Y."/>
            <person name="Ranby S.A."/>
            <person name="Rice C.M."/>
            <person name="Ross M.T."/>
            <person name="Searle S.M."/>
            <person name="Sehra H.K."/>
            <person name="Sheridan E."/>
            <person name="Skuce C.D."/>
            <person name="Smith S."/>
            <person name="Smith M."/>
            <person name="Spraggon L."/>
            <person name="Squares S.L."/>
            <person name="Steward C.A."/>
            <person name="Sycamore N."/>
            <person name="Tamlyn-Hall G."/>
            <person name="Tester J."/>
            <person name="Theaker A.J."/>
            <person name="Thomas D.W."/>
            <person name="Thorpe A."/>
            <person name="Tracey A."/>
            <person name="Tromans A."/>
            <person name="Tubby B."/>
            <person name="Wall M."/>
            <person name="Wallis J.M."/>
            <person name="West A.P."/>
            <person name="White S.S."/>
            <person name="Whitehead S.L."/>
            <person name="Whittaker H."/>
            <person name="Wild A."/>
            <person name="Willey D.J."/>
            <person name="Wilmer T.E."/>
            <person name="Wood J.M."/>
            <person name="Wray P.W."/>
            <person name="Wyatt J.C."/>
            <person name="Young L."/>
            <person name="Younger R.M."/>
            <person name="Bentley D.R."/>
            <person name="Coulson A."/>
            <person name="Durbin R.M."/>
            <person name="Hubbard T."/>
            <person name="Sulston J.E."/>
            <person name="Dunham I."/>
            <person name="Rogers J."/>
            <person name="Beck S."/>
        </authorList>
    </citation>
    <scope>NUCLEOTIDE SEQUENCE [LARGE SCALE GENOMIC DNA]</scope>
    <scope>VARIANT GLU-565</scope>
</reference>
<reference key="10">
    <citation type="submission" date="2005-07" db="EMBL/GenBank/DDBJ databases">
        <authorList>
            <person name="Mural R.J."/>
            <person name="Istrail S."/>
            <person name="Sutton G."/>
            <person name="Florea L."/>
            <person name="Halpern A.L."/>
            <person name="Mobarry C.M."/>
            <person name="Lippert R."/>
            <person name="Walenz B."/>
            <person name="Shatkay H."/>
            <person name="Dew I."/>
            <person name="Miller J.R."/>
            <person name="Flanigan M.J."/>
            <person name="Edwards N.J."/>
            <person name="Bolanos R."/>
            <person name="Fasulo D."/>
            <person name="Halldorsson B.V."/>
            <person name="Hannenhalli S."/>
            <person name="Turner R."/>
            <person name="Yooseph S."/>
            <person name="Lu F."/>
            <person name="Nusskern D.R."/>
            <person name="Shue B.C."/>
            <person name="Zheng X.H."/>
            <person name="Zhong F."/>
            <person name="Delcher A.L."/>
            <person name="Huson D.H."/>
            <person name="Kravitz S.A."/>
            <person name="Mouchard L."/>
            <person name="Reinert K."/>
            <person name="Remington K.A."/>
            <person name="Clark A.G."/>
            <person name="Waterman M.S."/>
            <person name="Eichler E.E."/>
            <person name="Adams M.D."/>
            <person name="Hunkapiller M.W."/>
            <person name="Myers E.W."/>
            <person name="Venter J.C."/>
        </authorList>
    </citation>
    <scope>NUCLEOTIDE SEQUENCE [LARGE SCALE GENOMIC DNA]</scope>
    <scope>VARIANT TRP-32</scope>
</reference>
<reference key="11">
    <citation type="journal article" date="2004" name="Genome Res.">
        <title>The status, quality, and expansion of the NIH full-length cDNA project: the Mammalian Gene Collection (MGC).</title>
        <authorList>
            <consortium name="The MGC Project Team"/>
        </authorList>
    </citation>
    <scope>NUCLEOTIDE SEQUENCE [LARGE SCALE MRNA] (ISOFORM 1)</scope>
    <scope>VARIANT TRP-32</scope>
    <source>
        <tissue>Colon</tissue>
    </source>
</reference>
<reference key="12">
    <citation type="journal article" date="1980" name="Biochemistry">
        <title>Amino-terminal sequence of human factor B of the alternative complement pathway and its cleavage fragments, Ba and Bb.</title>
        <authorList>
            <person name="Niemann M.A."/>
            <person name="Volanakis J.E."/>
            <person name="Mole J.E."/>
        </authorList>
    </citation>
    <scope>PROTEIN SEQUENCE OF 26-61 AND 260-277</scope>
    <scope>FUNCTION</scope>
    <scope>SUBCELLULAR LOCATION</scope>
    <scope>PROTEOLYTIC CLEAVAGE</scope>
</reference>
<reference key="13">
    <citation type="journal article" date="1984" name="J. Biol. Chem.">
        <title>Complete primary structure for the zymogen of human complement factor B.</title>
        <authorList>
            <person name="Mole J.E."/>
            <person name="Anderson J.K."/>
            <person name="Davison E.A."/>
            <person name="Woods D.E."/>
        </authorList>
    </citation>
    <scope>PROTEIN SEQUENCE OF 26-764</scope>
    <scope>PARTIAL NUCLEOTIDE SEQUENCE [MRNA]</scope>
    <scope>GLYCOSYLATION AT ASN-122; ASN-142; ASN-285 AND ASN-378</scope>
</reference>
<reference key="14">
    <citation type="journal article" date="1983" name="Biochem. J.">
        <title>Amino acid sequence of the Bb fragment from complement Factor B. Sequence of the major cyanogen bromide-cleavage peptide (CB-II) and completion of the sequence of the Bb fragment.</title>
        <authorList>
            <person name="Christie D.L."/>
            <person name="Gagnon J."/>
        </authorList>
    </citation>
    <scope>PROTEIN SEQUENCE OF 260-764</scope>
</reference>
<reference key="15">
    <citation type="journal article" date="1983" name="Proc. Natl. Acad. Sci. U.S.A.">
        <title>Molecular cloning and characterization of the gene coding for human complement protein factor B.</title>
        <authorList>
            <person name="Campbell R.D."/>
            <person name="Porter R.R."/>
        </authorList>
    </citation>
    <scope>NUCLEOTIDE SEQUENCE [GENOMIC DNA / MRNA] OF 339-764</scope>
</reference>
<reference key="16">
    <citation type="journal article" date="1982" name="Proc. Natl. Acad. Sci. U.S.A.">
        <title>Isolation of cDNA clones for the human complement protein factor B, a class III major histocompatibility complex gene product.</title>
        <authorList>
            <person name="Woods D.E."/>
            <person name="Markham A.F."/>
            <person name="Ricker A.T."/>
            <person name="Goldberger G."/>
            <person name="Colten H.R."/>
        </authorList>
    </citation>
    <scope>NUCLEOTIDE SEQUENCE [MRNA] OF 467-595 AND 752-764</scope>
</reference>
<reference key="17">
    <citation type="journal article" date="1984" name="EMBO J.">
        <title>Internal homologies of the Ba fragment from human complement component Factor B, a class III MHC antigen.</title>
        <authorList>
            <person name="Morley B.J."/>
            <person name="Campbell R.D."/>
        </authorList>
    </citation>
    <scope>NUCLEOTIDE SEQUENCE [MRNA] OF 16-259</scope>
</reference>
<reference key="18">
    <citation type="journal article" date="1987" name="Cell">
        <title>Cell-specific expression of the human complement protein factor B gene: evidence for the role of two distinct 5'-flanking elements.</title>
        <authorList>
            <person name="Wu L.C."/>
            <person name="Morley B.J."/>
            <person name="Campbell R.D."/>
        </authorList>
    </citation>
    <scope>NUCLEOTIDE SEQUENCE [GENOMIC DNA] OF 1-99</scope>
    <source>
        <tissue>Blood</tissue>
    </source>
</reference>
<reference key="19">
    <citation type="journal article" date="1977" name="J. Immunol.">
        <title>Human factor D of the alternative complement pathway: purification and characterization.</title>
        <authorList>
            <person name="Volanakis J.E."/>
            <person name="Schrohenloher R.E."/>
            <person name="Stroud R.M."/>
        </authorList>
    </citation>
    <scope>PROTEOLYTIC CLEAVAGE</scope>
</reference>
<reference key="20">
    <citation type="journal article" date="1978" name="Immunology">
        <title>A new function of the activated third component of complement: binding to C5, an essential step for C5 activation.</title>
        <authorList>
            <person name="Vogt W."/>
            <person name="Schmidt G."/>
            <person name="Von Buttlar B."/>
            <person name="Dieminger L."/>
        </authorList>
    </citation>
    <scope>FUNCTION</scope>
    <scope>CATALYTIC ACTIVITY</scope>
    <scope>SUBUNIT</scope>
</reference>
<reference key="21">
    <citation type="journal article" date="1982" name="J. Biol. Chem.">
        <title>The cobra venom factor-dependent C3 convertase of human complement. A kinetic and thermodynamic analysis of a protease acting on its natural high molecular weight substrate.</title>
        <authorList>
            <person name="Vogel C.W."/>
            <person name="Mueller-Eberhard H.J."/>
        </authorList>
    </citation>
    <scope>FUNCTION</scope>
    <scope>CATALYTIC ACTIVITY</scope>
</reference>
<reference key="22">
    <citation type="journal article" date="1983" name="J. Biol. Chem.">
        <title>The activation of human complement component C5 by a fluid phase C5 convertase.</title>
        <authorList>
            <person name="DiScipio R.G."/>
            <person name="Smith C.A."/>
            <person name="Muller-Eberhard H.J."/>
            <person name="Hugli T.E."/>
        </authorList>
    </citation>
    <scope>FUNCTION</scope>
    <scope>CATALYTIC ACTIVITY</scope>
    <scope>SUBUNIT</scope>
</reference>
<reference key="23">
    <citation type="journal article" date="1986" name="Biochem. J.">
        <title>The C3 convertase of the alternative pathway of human complement. Enzymic properties of the bimolecular proteinase.</title>
        <authorList>
            <person name="Pangburn M.K."/>
            <person name="Mueller-Eberhard H.J."/>
        </authorList>
    </citation>
    <scope>FUNCTION</scope>
    <scope>CATALYTIC ACTIVITY</scope>
    <scope>BIOPHYSICOCHEMICAL PROPERTIES</scope>
    <scope>COFACTOR</scope>
    <scope>SUBUNIT</scope>
</reference>
<reference key="24">
    <citation type="journal article" date="1986" name="J. Exp. Med.">
        <title>Growth-supporting activity of fragment Ba of the human alternative complement pathway for activated murine B lymphocytes.</title>
        <authorList>
            <person name="Praz F."/>
            <person name="Ruuth E."/>
        </authorList>
    </citation>
    <scope>FUNCTION (COMPLEMENT FACTOR B BA)</scope>
</reference>
<reference key="25">
    <citation type="journal article" date="1991" name="Biochem. J.">
        <title>The principal site of glycation of human complement factor B.</title>
        <authorList>
            <person name="Niemann M.A."/>
            <person name="Bhown A.S."/>
            <person name="Miller E.J."/>
        </authorList>
    </citation>
    <scope>GLYCATION AT LYS-291</scope>
</reference>
<reference key="26">
    <citation type="journal article" date="1998" name="J. Biol. Chem.">
        <title>A conserved element in the serine protease domain of complement factor B.</title>
        <authorList>
            <person name="Hourcade D.E."/>
            <person name="Mitchell L.M."/>
            <person name="Oglesby T.J."/>
        </authorList>
    </citation>
    <scope>FUNCTION</scope>
    <scope>CATALYTIC ACTIVITY</scope>
    <scope>PROTEOLYTIC CLEAVAGE</scope>
    <scope>SUBUNIT</scope>
    <scope>INTERACTION WITH CFP</scope>
    <scope>MUTAGENESIS OF ASP-740 AND PHE-741</scope>
</reference>
<reference key="27">
    <citation type="journal article" date="2005" name="J. Proteome Res.">
        <title>Human plasma N-glycoproteome analysis by immunoaffinity subtraction, hydrazide chemistry, and mass spectrometry.</title>
        <authorList>
            <person name="Liu T."/>
            <person name="Qian W.-J."/>
            <person name="Gritsenko M.A."/>
            <person name="Camp D.G. II"/>
            <person name="Monroe M.E."/>
            <person name="Moore R.J."/>
            <person name="Smith R.D."/>
        </authorList>
    </citation>
    <scope>GLYCOSYLATION [LARGE SCALE ANALYSIS] AT ASN-122; ASN-285 AND ASN-378</scope>
    <source>
        <tissue>Plasma</tissue>
    </source>
</reference>
<reference key="28">
    <citation type="journal article" date="2006" name="J. Biol. Chem.">
        <title>The role of properdin in the assembly of the alternative pathway C3 convertases of complement.</title>
        <authorList>
            <person name="Hourcade D.E."/>
        </authorList>
    </citation>
    <scope>INTERACTION WITH CFP</scope>
</reference>
<reference key="29">
    <citation type="journal article" date="2009" name="J. Proteome Res.">
        <title>Glycoproteomics analysis of human liver tissue by combination of multiple enzyme digestion and hydrazide chemistry.</title>
        <authorList>
            <person name="Chen R."/>
            <person name="Jiang X."/>
            <person name="Sun D."/>
            <person name="Han G."/>
            <person name="Wang F."/>
            <person name="Ye M."/>
            <person name="Wang L."/>
            <person name="Zou H."/>
        </authorList>
    </citation>
    <scope>GLYCOSYLATION [LARGE SCALE ANALYSIS] AT ASN-122 AND ASN-285</scope>
    <source>
        <tissue>Liver</tissue>
    </source>
</reference>
<reference key="30">
    <citation type="journal article" date="2013" name="N. Engl. J. Med.">
        <title>Deficiency in complement factor B.</title>
        <authorList>
            <person name="Slade C."/>
            <person name="Bosco J."/>
            <person name="Unglik G."/>
            <person name="Bleasel K."/>
            <person name="Nagel M."/>
            <person name="Winship I."/>
        </authorList>
    </citation>
    <scope>INVOLVEMENT IN CFBD</scope>
</reference>
<reference key="31">
    <citation type="journal article" date="2019" name="EMBO J.">
        <title>Bacterial killing by complement requires membrane attack complex formation via surface-bound C5 convertases.</title>
        <authorList>
            <person name="Heesterbeek D.A."/>
            <person name="Bardoel B.W."/>
            <person name="Parsons E.S."/>
            <person name="Bennett I."/>
            <person name="Ruyken M."/>
            <person name="Doorduijn D.J."/>
            <person name="Gorham R.D. Jr."/>
            <person name="Berends E.T."/>
            <person name="Pyne A.L."/>
            <person name="Hoogenboom B.W."/>
            <person name="Rooijakkers S.H."/>
        </authorList>
    </citation>
    <scope>FUNCTION</scope>
    <scope>SUBUNIT</scope>
    <scope>SUBCELLULAR LOCATION</scope>
</reference>
<reference key="32">
    <citation type="journal article" date="2000" name="EMBO J.">
        <title>New structural motifs on the chymotrypsin fold and their potential roles in complement factor B.</title>
        <authorList>
            <person name="Jing H."/>
            <person name="Xu Y."/>
            <person name="Carson M."/>
            <person name="Moore D."/>
            <person name="Macon K.J."/>
            <person name="Volanakis J.E."/>
            <person name="Narayana S.V.L."/>
        </authorList>
    </citation>
    <scope>X-RAY CRYSTALLOGRAPHY (2.1 ANGSTROMS) OF 467-764</scope>
    <scope>ACTIVE SITE</scope>
</reference>
<reference evidence="46 47 48" key="33">
    <citation type="journal article" date="2004" name="Mol. Cell">
        <title>Structural analysis of engineered Bb fragment of complement factor B: insights into the activation mechanism of the alternative pathway C3-convertase.</title>
        <authorList>
            <person name="Ponnuraj K."/>
            <person name="Xu Y."/>
            <person name="Macon K."/>
            <person name="Moore D."/>
            <person name="Volanakis J.E."/>
            <person name="Narayana S.V."/>
        </authorList>
    </citation>
    <scope>X-RAY CRYSTALLOGRAPHY (2.00 ANGSTROMS) OF 268-764 IN COMPLEX WITH MG(2+)</scope>
    <scope>COFACTOR</scope>
</reference>
<reference evidence="45" key="34">
    <citation type="journal article" date="2004" name="Structure">
        <title>Crystal structure of the A domain from complement factor B reveals an integrin-like open conformation.</title>
        <authorList>
            <person name="Bhattacharya A.A."/>
            <person name="Lupher M.L."/>
            <person name="Staunton D.E."/>
            <person name="Liddington R.C."/>
        </authorList>
    </citation>
    <scope>X-RAY CRYSTALLOGRAPHY (1.80 ANGSTROMS) OF 254-476 IN COMPLEX WITH MN(2+)</scope>
    <scope>COFACTOR</scope>
</reference>
<reference key="35">
    <citation type="journal article" date="2007" name="Nat. Struct. Mol. Biol.">
        <title>Factor B structure provides insights into activation of the central protease of the complement system.</title>
        <authorList>
            <person name="Milder F.J."/>
            <person name="Gomes L."/>
            <person name="Schouten A."/>
            <person name="Janssen B.J."/>
            <person name="Huizinga E.G."/>
            <person name="Romijn R.A."/>
            <person name="Hemrika W."/>
            <person name="Roos A."/>
            <person name="Daha M.R."/>
            <person name="Gros P."/>
        </authorList>
    </citation>
    <scope>X-RAY CRYSTALLOGRAPHY (2.30 ANGSTROMS) OF 26-764</scope>
    <scope>DOMAIN ARCHITECTURE</scope>
    <scope>GLYCOSYLATION AT ASN-122; ASN-142; ASN-285 AND ASN-378</scope>
</reference>
<reference evidence="52 53" key="36">
    <citation type="journal article" date="2009" name="EMBO J.">
        <title>Insights into complement convertase formation based on the structure of the factor B-cobra venom factor complex.</title>
        <authorList>
            <person name="Janssen B.J."/>
            <person name="Gomes L."/>
            <person name="Koning R.I."/>
            <person name="Svergun D.I."/>
            <person name="Koster A.J."/>
            <person name="Fritzinger D.C."/>
            <person name="Vogel C.-W."/>
            <person name="Gros P."/>
        </authorList>
    </citation>
    <scope>X-RAY CRYSTALLOGRAPHY (2.20 ANGSTROMS) OF 26-764 IN COMPLEX WITH MAGNESIUM AND COBRA VENOM FACTOR</scope>
    <scope>COFACTOR</scope>
    <scope>GLYCOSYLATION AT ASN-142 AND ASN-378</scope>
    <scope>DISULFIDE BONDS</scope>
</reference>
<reference evidence="49" key="37">
    <citation type="journal article" date="2009" name="Nat. Immunol.">
        <title>Structural and functional implications of the alternative complement pathway C3 convertase stabilized by a staphylococcal inhibitor.</title>
        <authorList>
            <person name="Rooijakkers S.H."/>
            <person name="Wu J."/>
            <person name="Ruyken M."/>
            <person name="van Domselaar R."/>
            <person name="Planken K.L."/>
            <person name="Tzekou A."/>
            <person name="Ricklin D."/>
            <person name="Lambris J.D."/>
            <person name="Janssen B.J."/>
            <person name="van Strijp J.A."/>
            <person name="Gros P."/>
        </authorList>
    </citation>
    <scope>X-RAY CRYSTALLOGRAPHY (3.90 ANGSTROMS) OF 260-764 IN COMPLEX WITH MG(2+) AND COMPLEMENT C3B</scope>
    <scope>COFACTOR</scope>
    <scope>GLYCOSYLATION AT ASN-378</scope>
</reference>
<reference evidence="50 51" key="38">
    <citation type="journal article" date="2010" name="Science">
        <title>Structures of C3b in complex with factors B and D give insight into complement convertase formation.</title>
        <authorList>
            <person name="Forneris F."/>
            <person name="Ricklin D."/>
            <person name="Wu J."/>
            <person name="Tzekou A."/>
            <person name="Wallace R.S."/>
            <person name="Lambris J.D."/>
            <person name="Gros P."/>
        </authorList>
    </citation>
    <scope>X-RAY CRYSTALLOGRAPHY (3.49 ANGSTROMS) OF 35-764 IN COMPLEX WITH MAGNESIUM</scope>
    <scope>COFACTOR</scope>
    <scope>PROTEOLYTIC CLEAVAGE</scope>
    <scope>GLYCOSYLATION AT ASN-122 AND ASN-378</scope>
    <scope>MUTAGENESIS OF GLU-471; GLU-644; TYR-689; ALA-690; GLN-733 AND VAL-734</scope>
</reference>
<reference evidence="54" key="39">
    <citation type="journal article" date="2017" name="EMBO J.">
        <title>Functional and structural insight into properdin control of complement alternative pathway amplification.</title>
        <authorList>
            <person name="Pedersen D.V."/>
            <person name="Roumenina L."/>
            <person name="Jensen R.K."/>
            <person name="Gadeberg T.A."/>
            <person name="Marinozzi C."/>
            <person name="Picard C."/>
            <person name="Rybkine T."/>
            <person name="Thiel S."/>
            <person name="Soerensen U.B."/>
            <person name="Stover C."/>
            <person name="Fremeaux-Bacchi V."/>
            <person name="Andersen G.R."/>
        </authorList>
    </citation>
    <scope>X-RAY CRYSTALLOGRAPHY (6.0 ANGSTROMS) OF 260-764 IN COMPLEX WITH COMPLEMENT C3 BETA CHAIN; CFP AND STAPHYLOCOCCUS AUREUS PROTEIN SCN</scope>
    <scope>INTERACTION WITH COMPLEMENT C3 BETA CHAIN</scope>
</reference>
<reference evidence="55" key="40">
    <citation type="journal article" date="2019" name="Front. Immunol.">
        <title>Structural Basis for Properdin Oligomerization and Convertase Stimulation in the Human Complement System.</title>
        <authorList>
            <person name="Pedersen D.V."/>
            <person name="Gadeberg T.A.F."/>
            <person name="Thomas C."/>
            <person name="Wang Y."/>
            <person name="Joram N."/>
            <person name="Jensen R.K."/>
            <person name="Mazarakis S.M.M."/>
            <person name="Revel M."/>
            <person name="El Sissy C."/>
            <person name="Petersen S.V."/>
            <person name="Lindorff-Larsen K."/>
            <person name="Thiel S."/>
            <person name="Laursen N.S."/>
            <person name="Fremeaux-Bacchi V."/>
            <person name="Andersen G.R."/>
        </authorList>
    </citation>
    <scope>X-RAY CRYSTALLOGRAPHY (6.15 ANGSTROMS) OF 260-764 IN COMPLEX WITH COMPLEMENT C3 BETA CHAIN; CFP AND STAPHYLOCOCCUS AUREUS PROTEIN SCN</scope>
    <scope>INTERACTION WITH COMPLEMENT C3 BETA CHAIN AND CFP</scope>
    <scope>MUTAGENESIS OF 348-LYS--LYS-350</scope>
</reference>
<reference key="41">
    <citation type="journal article" date="2006" name="Nat. Genet.">
        <title>Variation in factor B (BF) and complement component 2 (C2) genes is associated with age-related macular degeneration.</title>
        <authorList>
            <person name="Gold B."/>
            <person name="Merriam J.E."/>
            <person name="Zernant J."/>
            <person name="Hancox L.S."/>
            <person name="Taiber A.J."/>
            <person name="Gehrs K."/>
            <person name="Cramer K."/>
            <person name="Neel J."/>
            <person name="Bergeron J."/>
            <person name="Barile G.R."/>
            <person name="Smith R.T."/>
            <person name="Hageman G.S."/>
            <person name="Dean M."/>
            <person name="Allikmets R."/>
        </authorList>
    </citation>
    <scope>VARIANTS HIS-9 AND GLN-32</scope>
    <scope>INVOLVEMENT IN ARMD14</scope>
</reference>
<reference key="42">
    <citation type="journal article" date="2007" name="Proc. Natl. Acad. Sci. U.S.A.">
        <title>Gain-of-function mutations in complement factor B are associated with atypical hemolytic uremic syndrome.</title>
        <authorList>
            <person name="Goicoechea de Jorge E."/>
            <person name="Harris C.L."/>
            <person name="Esparza-Gordillo J."/>
            <person name="Carreras L."/>
            <person name="Arranz E.A."/>
            <person name="Garrido C.A."/>
            <person name="Lopez-Trascasa M."/>
            <person name="Sanchez-Corral P."/>
            <person name="Morgan B.P."/>
            <person name="Rodriguez de Cordoba S."/>
        </authorList>
    </citation>
    <scope>VARIANTS AHUS4 LEU-286 AND GLU-323</scope>
    <scope>CHARACTERIZATION OF VARIANTS AHUS4 LEU-286 AND GLU-323</scope>
</reference>
<reference key="43">
    <citation type="journal article" date="2010" name="Hum. Mutat.">
        <title>Mutations in alternative pathway complement proteins in American patients with atypical hemolytic uremic syndrome.</title>
        <authorList>
            <person name="Maga T.K."/>
            <person name="Nishimura C.J."/>
            <person name="Weaver A.E."/>
            <person name="Frees K.L."/>
            <person name="Smith R.J.H."/>
        </authorList>
    </citation>
    <scope>VARIANTS AHUS4 PRO-166; GLN-203; LEU-242; GLN-323; ILE-458 AND ARG-533</scope>
</reference>
<organism>
    <name type="scientific">Homo sapiens</name>
    <name type="common">Human</name>
    <dbReference type="NCBI Taxonomy" id="9606"/>
    <lineage>
        <taxon>Eukaryota</taxon>
        <taxon>Metazoa</taxon>
        <taxon>Chordata</taxon>
        <taxon>Craniata</taxon>
        <taxon>Vertebrata</taxon>
        <taxon>Euteleostomi</taxon>
        <taxon>Mammalia</taxon>
        <taxon>Eutheria</taxon>
        <taxon>Euarchontoglires</taxon>
        <taxon>Primates</taxon>
        <taxon>Haplorrhini</taxon>
        <taxon>Catarrhini</taxon>
        <taxon>Hominidae</taxon>
        <taxon>Homo</taxon>
    </lineage>
</organism>